<sequence>MTAIIKEIVSRNKRRYQEDGFDLDLTYIYPNIIAMGFPAERLEGVYRNNIDDVVRFLDSKHKNHYKIYNLCAERHYDTAKFNCRVAQYPFEDHNPPQLELIKPFCEDLDQWLSEDDNHVAAIHCKAGKGRTGVMICAYLLHRGKFLKAQEALDFYGEVRTRDKKGVTIPSQRRYVYYYSYLLKNHLDYRPVALLFHKMMFETIPMFSGGTCNPQFVVCQLKVKIYSSNSGPTRREDKFMYFEFPQPLPVCGDIKVEFFHKQNKMLKKDKMFHFWVNTFFIPGPEETSEKVENGSLCDQEIDSICSIERADNDKEYLVLTLTKNDLDKANKDKANRYFSPNFKVKLYFTKTVEEPSNPEASSSTSVTPDVSDNEPDHYRYSDTTDSDPENEPFDEDQHTQITKV</sequence>
<name>PTEN_HUMAN</name>
<protein>
    <recommendedName>
        <fullName evidence="81 83">Phosphatidylinositol 3,4,5-trisphosphate 3-phosphatase and dual-specificity protein phosphatase PTEN</fullName>
        <ecNumber evidence="60">3.1.3.16</ecNumber>
        <ecNumber evidence="58 60">3.1.3.48</ecNumber>
        <ecNumber evidence="34 73">3.1.3.67</ecNumber>
    </recommendedName>
    <alternativeName>
        <fullName evidence="79 82">Inositol polyphosphate 3-phosphatase</fullName>
        <ecNumber evidence="79 82">3.1.3.-</ecNumber>
    </alternativeName>
    <alternativeName>
        <fullName>Mutated in multiple advanced cancers 1</fullName>
    </alternativeName>
    <alternativeName>
        <fullName>Phosphatase and tensin homolog</fullName>
    </alternativeName>
</protein>
<accession>P60484</accession>
<accession>B2R904</accession>
<accession>F2YHV0</accession>
<accession>O00633</accession>
<accession>O02679</accession>
<accession>Q6ICT7</accession>
<keyword id="KW-0002">3D-structure</keyword>
<keyword id="KW-0007">Acetylation</keyword>
<keyword id="KW-0024">Alternative initiation</keyword>
<keyword id="KW-0025">Alternative splicing</keyword>
<keyword id="KW-0053">Apoptosis</keyword>
<keyword id="KW-1268">Autism spectrum disorder</keyword>
<keyword id="KW-0966">Cell projection</keyword>
<keyword id="KW-0963">Cytoplasm</keyword>
<keyword id="KW-0225">Disease variant</keyword>
<keyword id="KW-0378">Hydrolase</keyword>
<keyword id="KW-1017">Isopeptide bond</keyword>
<keyword id="KW-0443">Lipid metabolism</keyword>
<keyword id="KW-0446">Lipid-binding</keyword>
<keyword id="KW-0524">Neurogenesis</keyword>
<keyword id="KW-0539">Nucleus</keyword>
<keyword id="KW-0597">Phosphoprotein</keyword>
<keyword id="KW-0904">Protein phosphatase</keyword>
<keyword id="KW-1267">Proteomics identification</keyword>
<keyword id="KW-1185">Reference proteome</keyword>
<keyword id="KW-0964">Secreted</keyword>
<keyword id="KW-0770">Synapse</keyword>
<keyword id="KW-0043">Tumor suppressor</keyword>
<keyword id="KW-0832">Ubl conjugation</keyword>
<gene>
    <name type="primary">PTEN</name>
    <name type="synonym">MMAC1</name>
    <name type="synonym">TEP1</name>
</gene>
<comment type="function">
    <text evidence="1 2 9 20 22 30 34 36 42 49 50 52 53 58 60 67 69 73">Dual-specificity protein phosphatase, dephosphorylating tyrosine-, serine- and threonine-phosphorylated proteins (PubMed:9187108, PubMed:9256433, PubMed:9616126). Also functions as a lipid phosphatase, removing the phosphate in the D3 position of the inositol ring of PtdIns(3,4,5)P3/phosphatidylinositol 3,4,5-trisphosphate, PtdIns(3,4)P2/phosphatidylinositol 3,4-diphosphate and PtdIns3P/phosphatidylinositol 3-phosphate with a preference for PtdIns(3,4,5)P3 (PubMed:16824732, PubMed:26504226, PubMed:9593664, PubMed:9811831). Furthermore, this enzyme can also act as a cytosolic inositol 3-phosphatase acting on Ins(1,3,4,5,6)P5/inositol 1,3,4,5,6 pentakisphosphate and possibly Ins(1,3,4,5)P4/1D-myo-inositol 1,3,4,5-tetrakisphosphate (PubMed:11418101, PubMed:15979280). Antagonizes the PI3K-AKT/PKB signaling pathway by dephosphorylating phosphoinositides and thereby modulating cell cycle progression and cell survival (PubMed:31492966, PubMed:37279284). The unphosphorylated form cooperates with MAGI2 to suppress AKT1 activation (PubMed:11707428). In motile cells, suppresses the formation of lateral pseudopods and thereby promotes cell polarization and directed movement (PubMed:22279049). Dephosphorylates tyrosine-phosphorylated focal adhesion kinase and inhibits cell migration and integrin-mediated cell spreading and focal adhesion formation (PubMed:22279049). Required for growth factor-induced epithelial cell migration; growth factor stimulation induces PTEN phosphorylation which changes its binding preference from the p85 regulatory subunit of the PI3K kinase complex to DLC1 and results in translocation of the PTEN-DLC1 complex to the posterior of migrating cells to promote RHOA activation (PubMed:26166433). Meanwhile, TNS3 switches binding preference from DLC1 to p85 and the TNS3-p85 complex translocates to the leading edge of migrating cells to activate RAC1 activation (PubMed:26166433). Plays a role as a key modulator of the AKT-mTOR signaling pathway controlling the tempo of the process of newborn neurons integration during adult neurogenesis, including correct neuron positioning, dendritic development and synapse formation (By similarity). Involved in the regulation of synaptic function in excitatory hippocampal synapses. Recruited to the postsynaptic membrane upon NMDA receptor activation, is required for the modulation of synaptic activity during plasticity. Enhancement of lipid phosphatase activity is able to drive depression of AMPA receptor-mediated synaptic responses, activity required for NMDA receptor-dependent long-term depression (LTD) (By similarity). May be a negative regulator of insulin signaling and glucose metabolism in adipose tissue. The nuclear monoubiquitinated form possesses greater apoptotic potential, whereas the cytoplasmic nonubiquitinated form induces less tumor suppressive ability (PubMed:10468583, PubMed:18716620).</text>
</comment>
<comment type="function">
    <molecule>Isoform alpha</molecule>
    <text evidence="44">Functional kinase, like isoform 1 it antagonizes the PI3K-AKT/PKB signaling pathway. Plays a role in mitochondrial energetic metabolism by promoting COX activity and ATP production, via collaboration with isoform 1 in increasing protein levels of PINK1.</text>
</comment>
<comment type="catalytic activity">
    <reaction evidence="34 73">
        <text>a 1,2-diacyl-sn-glycero-3-phospho-(1D-myo-inositol-3,4,5-trisphosphate) + H2O = a 1,2-diacyl-sn-glycero-3-phospho-(1D-myo-inositol-4,5-bisphosphate) + phosphate</text>
        <dbReference type="Rhea" id="RHEA:25017"/>
        <dbReference type="ChEBI" id="CHEBI:15377"/>
        <dbReference type="ChEBI" id="CHEBI:43474"/>
        <dbReference type="ChEBI" id="CHEBI:57836"/>
        <dbReference type="ChEBI" id="CHEBI:58456"/>
        <dbReference type="EC" id="3.1.3.67"/>
    </reaction>
    <physiologicalReaction direction="left-to-right" evidence="80">
        <dbReference type="Rhea" id="RHEA:25018"/>
    </physiologicalReaction>
</comment>
<comment type="catalytic activity">
    <reaction evidence="60">
        <text>O-phospho-L-seryl-[protein] + H2O = L-seryl-[protein] + phosphate</text>
        <dbReference type="Rhea" id="RHEA:20629"/>
        <dbReference type="Rhea" id="RHEA-COMP:9863"/>
        <dbReference type="Rhea" id="RHEA-COMP:11604"/>
        <dbReference type="ChEBI" id="CHEBI:15377"/>
        <dbReference type="ChEBI" id="CHEBI:29999"/>
        <dbReference type="ChEBI" id="CHEBI:43474"/>
        <dbReference type="ChEBI" id="CHEBI:83421"/>
        <dbReference type="EC" id="3.1.3.16"/>
    </reaction>
    <physiologicalReaction direction="left-to-right" evidence="81">
        <dbReference type="Rhea" id="RHEA:20630"/>
    </physiologicalReaction>
</comment>
<comment type="catalytic activity">
    <reaction evidence="60">
        <text>O-phospho-L-threonyl-[protein] + H2O = L-threonyl-[protein] + phosphate</text>
        <dbReference type="Rhea" id="RHEA:47004"/>
        <dbReference type="Rhea" id="RHEA-COMP:11060"/>
        <dbReference type="Rhea" id="RHEA-COMP:11605"/>
        <dbReference type="ChEBI" id="CHEBI:15377"/>
        <dbReference type="ChEBI" id="CHEBI:30013"/>
        <dbReference type="ChEBI" id="CHEBI:43474"/>
        <dbReference type="ChEBI" id="CHEBI:61977"/>
        <dbReference type="EC" id="3.1.3.16"/>
    </reaction>
    <physiologicalReaction direction="left-to-right" evidence="81">
        <dbReference type="Rhea" id="RHEA:47005"/>
    </physiologicalReaction>
</comment>
<comment type="catalytic activity">
    <reaction evidence="58 60">
        <text>O-phospho-L-tyrosyl-[protein] + H2O = L-tyrosyl-[protein] + phosphate</text>
        <dbReference type="Rhea" id="RHEA:10684"/>
        <dbReference type="Rhea" id="RHEA-COMP:10136"/>
        <dbReference type="Rhea" id="RHEA-COMP:20101"/>
        <dbReference type="ChEBI" id="CHEBI:15377"/>
        <dbReference type="ChEBI" id="CHEBI:43474"/>
        <dbReference type="ChEBI" id="CHEBI:46858"/>
        <dbReference type="ChEBI" id="CHEBI:61978"/>
        <dbReference type="EC" id="3.1.3.48"/>
    </reaction>
    <physiologicalReaction direction="left-to-right" evidence="81">
        <dbReference type="Rhea" id="RHEA:10685"/>
    </physiologicalReaction>
</comment>
<comment type="catalytic activity">
    <reaction evidence="34 67">
        <text>1,2-dioctanoyl-sn-glycero-3-phospho-(1D-myo-inositol-3,4,5-trisphosphate) + H2O = 1,2-dioctanoyl-sn-glycero-3-phospho-(1D-myo-inositol-4,5-bisphosphate) + phosphate</text>
        <dbReference type="Rhea" id="RHEA:43552"/>
        <dbReference type="ChEBI" id="CHEBI:15377"/>
        <dbReference type="ChEBI" id="CHEBI:43474"/>
        <dbReference type="ChEBI" id="CHEBI:83416"/>
        <dbReference type="ChEBI" id="CHEBI:83419"/>
    </reaction>
    <physiologicalReaction direction="left-to-right" evidence="80">
        <dbReference type="Rhea" id="RHEA:43553"/>
    </physiologicalReaction>
</comment>
<comment type="catalytic activity">
    <reaction evidence="34 67">
        <text>1,2-dihexadecanoyl-sn-glycero-3-phospho-(1D-myo-inositol-3,4,5-trisphosphate) + H2O = 1,2-dihexadecanoyl-sn-glycero-3-phospho-(1D-myo-inositol-4,5-bisphosphate) + phosphate</text>
        <dbReference type="Rhea" id="RHEA:43560"/>
        <dbReference type="ChEBI" id="CHEBI:15377"/>
        <dbReference type="ChEBI" id="CHEBI:43474"/>
        <dbReference type="ChEBI" id="CHEBI:83420"/>
        <dbReference type="ChEBI" id="CHEBI:83423"/>
    </reaction>
    <physiologicalReaction direction="left-to-right" evidence="80">
        <dbReference type="Rhea" id="RHEA:43561"/>
    </physiologicalReaction>
</comment>
<comment type="catalytic activity">
    <reaction evidence="20">
        <text>1D-myo-inositol 1,3,4,5,6-pentakisphosphate + H2O = 1D-myo-inositol 1,4,5,6-tetrakisphosphate + phosphate</text>
        <dbReference type="Rhea" id="RHEA:77143"/>
        <dbReference type="ChEBI" id="CHEBI:15377"/>
        <dbReference type="ChEBI" id="CHEBI:43474"/>
        <dbReference type="ChEBI" id="CHEBI:57627"/>
        <dbReference type="ChEBI" id="CHEBI:57733"/>
    </reaction>
    <physiologicalReaction direction="left-to-right" evidence="20">
        <dbReference type="Rhea" id="RHEA:77144"/>
    </physiologicalReaction>
</comment>
<comment type="catalytic activity">
    <reaction evidence="67">
        <text>1D-myo-inositol 1,3,4,5-tetrakisphosphate + H2O = 1D-myo-inositol 1,4,5-trisphosphate + phosphate</text>
        <dbReference type="Rhea" id="RHEA:77155"/>
        <dbReference type="ChEBI" id="CHEBI:15377"/>
        <dbReference type="ChEBI" id="CHEBI:43474"/>
        <dbReference type="ChEBI" id="CHEBI:57895"/>
        <dbReference type="ChEBI" id="CHEBI:203600"/>
    </reaction>
    <physiologicalReaction direction="left-to-right" evidence="82">
        <dbReference type="Rhea" id="RHEA:77156"/>
    </physiologicalReaction>
</comment>
<comment type="cofactor">
    <cofactor>
        <name>Mg(2+)</name>
        <dbReference type="ChEBI" id="CHEBI:18420"/>
    </cofactor>
</comment>
<comment type="activity regulation">
    <text evidence="34">Enzymatic activity is enhanced in the presence of phosphatidylserine.</text>
</comment>
<comment type="biophysicochemical properties">
    <kinetics>
        <KM evidence="20">26 uM for PtdIns(3,4,5)P3</KM>
        <KM evidence="20">11.5 uM for 1D-myo-inositol 1,3,4-trisphosphate</KM>
        <KM evidence="20">4.6 uM for 1D-myo-inositol 1,3,4,5-tetrakisphosphate</KM>
        <KM evidence="20">7.1 uM for 1D-myo-inositol 1,3,4,5,6-pentakisphosphate</KM>
        <Vmax evidence="20">60.0 nmol/min/mg enzyme with PtdIns(3,4,5)P3 as substrate</Vmax>
        <Vmax evidence="20">24.0 nmol/min/mg enzyme with 1D-myo-inositol 1,3,4-trisphosphate as substrate</Vmax>
        <Vmax evidence="20">112.0 nmol/min/mg enzyme with 1D-myo-inositol 1,3,4,5-tetrakisphosphate as substrate</Vmax>
        <Vmax evidence="20">67.0 nmol/min/mg enzyme with 1D-myo-inositol 1,3,4,5,6-pentakisphosphate as substrate</Vmax>
    </kinetics>
</comment>
<comment type="subunit">
    <text evidence="1 2 10 11 12 13 22 27 29 31 35 36 37 38 39 47 48 49">Monomer. The unphosphorylated form interacts with the second PDZ domain of MAGI2 and with DLG1 and MAST2 in vitro (PubMed:10646847, PubMed:10760291, PubMed:11707428). Interacts with MAGI2, MAGI3, MAST1 and MAST3, but neither with MAST4 nor with DLG5; interaction with MAGI2 increases protein stability (PubMed:10748157, PubMed:15951562). Interacts with NEDD4 (PubMed:17218260). Interacts with NDFIP1 and NDFIP2; in the presence of NEDD4 or ITCH, this interaction promotes PTEN ubiquitination (PubMed:20534535, PubMed:25801959). Interacts (via C2 domain) with FRK (PubMed:19345329). Interacts with USP7; the interaction is direct (PubMed:18716620). Interacts with ROCK1 (By similarity). Interacts with XIAP/BIRC4 (PubMed:19473982). Interacts with STK11; the interaction phosphorylates PTEN (PubMed:15987703). Interacts with PPP1R16B (PubMed:25007873). Interacts with NOP53; regulates PTEN phosphorylation and increases its stability (PubMed:15355975). Interacts (via PDZ domain-binding motif) with DLG4; the interaction is induced by NMDA and is required for PTEN location at postsynaptic density (By similarity). Interacts with the regulatory p85 subunit of the PI3K kinase complex and with Rho GTPase-activating protein DLC1; in resting cells, interacts (via C2 tensin-type domain) with p85 but, following growth factor stimulation, PTEN is phosphorylated which leads to weakened interaction with p85 and enhanced interaction (via C2 tensin-type domain) with DLC1 while p85 interaction with TNS3 increases (PubMed:26166433).</text>
</comment>
<comment type="interaction">
    <interactant intactId="EBI-696162">
        <id>P60484</id>
    </interactant>
    <interactant intactId="EBI-357530">
        <id>Q9ULX6</id>
        <label>AKAP8L</label>
    </interactant>
    <organismsDiffer>false</organismsDiffer>
    <experiments>2</experiments>
</comment>
<comment type="interaction">
    <interactant intactId="EBI-696162">
        <id>P60484</id>
    </interactant>
    <interactant intactId="EBI-2341576">
        <id>P35226</id>
        <label>BMI1</label>
    </interactant>
    <organismsDiffer>false</organismsDiffer>
    <experiments>7</experiments>
</comment>
<comment type="interaction">
    <interactant intactId="EBI-696162">
        <id>P60484</id>
    </interactant>
    <interactant intactId="EBI-994813">
        <id>P30260</id>
        <label>CDC27</label>
    </interactant>
    <organismsDiffer>false</organismsDiffer>
    <experiments>7</experiments>
</comment>
<comment type="interaction">
    <interactant intactId="EBI-696162">
        <id>P60484</id>
    </interactant>
    <interactant intactId="EBI-949911">
        <id>Q9P0U4</id>
        <label>CXXC1</label>
    </interactant>
    <organismsDiffer>false</organismsDiffer>
    <experiments>2</experiments>
</comment>
<comment type="interaction">
    <interactant intactId="EBI-696162">
        <id>P60484</id>
    </interactant>
    <interactant intactId="EBI-351394">
        <id>Q16643</id>
        <label>DBN1</label>
    </interactant>
    <organismsDiffer>false</organismsDiffer>
    <experiments>5</experiments>
</comment>
<comment type="interaction">
    <interactant intactId="EBI-696162">
        <id>P60484</id>
    </interactant>
    <interactant intactId="EBI-1383583">
        <id>P42685</id>
        <label>FRK</label>
    </interactant>
    <organismsDiffer>false</organismsDiffer>
    <experiments>7</experiments>
</comment>
<comment type="interaction">
    <interactant intactId="EBI-696162">
        <id>P60484</id>
    </interactant>
    <interactant intactId="EBI-311420">
        <id>O60307</id>
        <label>MAST3</label>
    </interactant>
    <organismsDiffer>false</organismsDiffer>
    <experiments>3</experiments>
</comment>
<comment type="interaction">
    <interactant intactId="EBI-696162">
        <id>P60484</id>
    </interactant>
    <interactant intactId="EBI-81196">
        <id>Q9Y6Q9</id>
        <label>NCOA3</label>
    </interactant>
    <organismsDiffer>false</organismsDiffer>
    <experiments>2</experiments>
</comment>
<comment type="interaction">
    <interactant intactId="EBI-696162">
        <id>P60484</id>
    </interactant>
    <interactant intactId="EBI-726944">
        <id>P46934</id>
        <label>NEDD4</label>
    </interactant>
    <organismsDiffer>false</organismsDiffer>
    <experiments>4</experiments>
</comment>
<comment type="interaction">
    <interactant intactId="EBI-696162">
        <id>P60484</id>
    </interactant>
    <interactant intactId="EBI-349787">
        <id>O14745</id>
        <label>NHERF1</label>
    </interactant>
    <organismsDiffer>false</organismsDiffer>
    <experiments>7</experiments>
</comment>
<comment type="interaction">
    <interactant intactId="EBI-696162">
        <id>P60484</id>
    </interactant>
    <interactant intactId="EBI-1149760">
        <id>Q15599</id>
        <label>NHERF2</label>
    </interactant>
    <organismsDiffer>false</organismsDiffer>
    <experiments>5</experiments>
</comment>
<comment type="interaction">
    <interactant intactId="EBI-696162">
        <id>P60484</id>
    </interactant>
    <interactant intactId="EBI-641237">
        <id>P09619</id>
        <label>PDGFRB</label>
    </interactant>
    <organismsDiffer>false</organismsDiffer>
    <experiments>3</experiments>
</comment>
<comment type="interaction">
    <interactant intactId="EBI-696162">
        <id>P60484</id>
    </interactant>
    <interactant intactId="EBI-79165">
        <id>Q9NRD5</id>
        <label>PICK1</label>
    </interactant>
    <organismsDiffer>false</organismsDiffer>
    <experiments>2</experiments>
</comment>
<comment type="interaction">
    <interactant intactId="EBI-696162">
        <id>P60484</id>
    </interactant>
    <interactant intactId="EBI-357253">
        <id>P62136</id>
        <label>PPP1CA</label>
    </interactant>
    <organismsDiffer>false</organismsDiffer>
    <experiments>2</experiments>
</comment>
<comment type="interaction">
    <interactant intactId="EBI-696162">
        <id>P60484</id>
    </interactant>
    <interactant intactId="EBI-353193">
        <id>Q06830</id>
        <label>PRDX1</label>
    </interactant>
    <organismsDiffer>false</organismsDiffer>
    <experiments>7</experiments>
</comment>
<comment type="interaction">
    <interactant intactId="EBI-696162">
        <id>P60484</id>
    </interactant>
    <interactant intactId="EBI-696162">
        <id>P60484</id>
        <label>PTEN</label>
    </interactant>
    <organismsDiffer>false</organismsDiffer>
    <experiments>9</experiments>
</comment>
<comment type="interaction">
    <interactant intactId="EBI-696162">
        <id>P60484</id>
    </interactant>
    <interactant intactId="EBI-743549">
        <id>O43791</id>
        <label>SPOP</label>
    </interactant>
    <organismsDiffer>false</organismsDiffer>
    <experiments>4</experiments>
</comment>
<comment type="interaction">
    <interactant intactId="EBI-696162">
        <id>P60484</id>
    </interactant>
    <interactant intactId="EBI-389325">
        <id>Q62696</id>
        <label>Dlg1</label>
    </interactant>
    <organismsDiffer>true</organismsDiffer>
    <experiments>2</experiments>
</comment>
<comment type="interaction">
    <interactant intactId="EBI-696162">
        <id>P60484</id>
    </interactant>
    <interactant intactId="EBI-696179">
        <id>O88382</id>
        <label>Magi2</label>
    </interactant>
    <organismsDiffer>true</organismsDiffer>
    <experiments>3</experiments>
</comment>
<comment type="interaction">
    <interactant intactId="EBI-696162">
        <id>P60484</id>
    </interactant>
    <interactant intactId="EBI-696226">
        <id>Q9JK71</id>
        <label>Magi3</label>
    </interactant>
    <organismsDiffer>true</organismsDiffer>
    <experiments>3</experiments>
</comment>
<comment type="interaction">
    <interactant intactId="EBI-696162">
        <id>P60484</id>
    </interactant>
    <interactant intactId="EBI-491771">
        <id>Q9R1L5</id>
        <label>Mast1</label>
    </interactant>
    <organismsDiffer>true</organismsDiffer>
    <experiments>3</experiments>
</comment>
<comment type="interaction">
    <interactant intactId="EBI-696162">
        <id>P60484</id>
    </interactant>
    <interactant intactId="EBI-493888">
        <id>Q60592</id>
        <label>Mast2</label>
    </interactant>
    <organismsDiffer>true</organismsDiffer>
    <experiments>4</experiments>
</comment>
<comment type="interaction">
    <interactant intactId="EBI-696162">
        <id>P60484</id>
    </interactant>
    <interactant intactId="EBI-538451">
        <id>Q9JHL1</id>
        <label>Nherf2</label>
    </interactant>
    <organismsDiffer>true</organismsDiffer>
    <experiments>2</experiments>
</comment>
<comment type="interaction">
    <interactant intactId="EBI-15722967">
        <id>P60484-1</id>
    </interactant>
    <interactant intactId="EBI-15778214">
        <id>Q19T08</id>
        <label>ECSCR</label>
    </interactant>
    <organismsDiffer>false</organismsDiffer>
    <experiments>4</experiments>
</comment>
<comment type="interaction">
    <interactant intactId="EBI-15722967">
        <id>P60484-1</id>
    </interactant>
    <interactant intactId="EBI-16170539">
        <id>Q5T2D3</id>
        <label>OTUD3</label>
    </interactant>
    <organismsDiffer>false</organismsDiffer>
    <experiments>9</experiments>
</comment>
<comment type="interaction">
    <interactant intactId="EBI-15722967">
        <id>P60484-1</id>
    </interactant>
    <interactant intactId="EBI-15722967">
        <id>P60484-1</id>
        <label>PTEN</label>
    </interactant>
    <organismsDiffer>false</organismsDiffer>
    <experiments>3</experiments>
</comment>
<comment type="interaction">
    <interactant intactId="EBI-15722967">
        <id>P60484-1</id>
    </interactant>
    <interactant intactId="EBI-302474">
        <id>Q93009</id>
        <label>USP7</label>
    </interactant>
    <organismsDiffer>false</organismsDiffer>
    <experiments>5</experiments>
</comment>
<comment type="subcellular location">
    <subcellularLocation>
        <location evidence="31 36 38 48 58">Cytoplasm</location>
    </subcellularLocation>
    <subcellularLocation>
        <location evidence="31 36 38 48">Nucleus</location>
    </subcellularLocation>
    <subcellularLocation>
        <location evidence="36">Nucleus</location>
        <location evidence="36">PML body</location>
    </subcellularLocation>
    <subcellularLocation>
        <location evidence="2">Cell projection</location>
        <location evidence="2">Dendritic spine</location>
    </subcellularLocation>
    <subcellularLocation>
        <location evidence="2">Postsynaptic density</location>
    </subcellularLocation>
    <text evidence="2 36 38">Monoubiquitinated form is nuclear. Nonubiquitinated form is cytoplasmic. Colocalized with PML and USP7 in PML nuclear bodies (PubMed:18716620). XIAP/BIRC4 promotes its nuclear localization (PubMed:19473982). Associares with the postsynaptic density in response to NMDAR activation (By similarity).</text>
</comment>
<comment type="subcellular location">
    <molecule>Isoform alpha</molecule>
    <subcellularLocation>
        <location evidence="44 45">Secreted</location>
    </subcellularLocation>
    <text evidence="44 45">May be secreted via a classical signal peptide and reenter into cells with the help of a poly-Arg motif.</text>
</comment>
<comment type="alternative products">
    <event type="alternative splicing"/>
    <event type="alternative initiation"/>
    <isoform>
        <id>P60484-1</id>
        <name>1</name>
        <name>55kDa</name>
        <sequence type="displayed"/>
    </isoform>
    <isoform>
        <id>P60484-2</id>
        <name>alpha</name>
        <name>70kDa</name>
        <name>PTEN-long</name>
        <sequence type="described" ref="VSP_055420"/>
    </isoform>
    <isoform>
        <id>P60484-3</id>
        <name>3</name>
        <sequence type="described" ref="VSP_055421 VSP_055422 VSP_055423"/>
    </isoform>
</comment>
<comment type="tissue specificity">
    <text evidence="56">Expressed at a relatively high level in all adult tissues, including heart, brain, placenta, lung, liver, muscle, kidney and pancreas.</text>
</comment>
<comment type="induction">
    <text evidence="58">Down-regulated by TGFB1.</text>
</comment>
<comment type="domain">
    <text evidence="9 10">The C2 domain binds phospholipid membranes in vitro in a Ca(2+)-independent manner; this binding is important for its tumor suppressor function.</text>
</comment>
<comment type="PTM">
    <text evidence="11 18 22 26 29 31 36 37 40 49">Constitutively phosphorylated by CK2 under normal conditions. Phosphorylated in vitro by MAST1, MAST2, MAST3 and STK11. Phosphorylation results in an inhibited activity towards PIP3. Phosphorylation can both inhibit or promote PDZ-binding. Phosphorylation at Tyr-336 by FRK/PTK5 protects this protein from ubiquitin-mediated degradation probably by inhibiting its binding to NEDD4. Phosphorylation by ROCK1 is essential for its stability and activity. Phosphorylation by PLK3 promotes its stability and prevents its degradation by the proteasome. Phosphorylated on Thr-319 and Thr-321 in the C2-type tensin domain following EGF stimulation which changes its binding preference from the p85 regulatory subunit of the PI3K kinase complex to DLC1 (PubMed:26166433).</text>
</comment>
<comment type="PTM">
    <text evidence="36 38">Monoubiquitinated; monoubiquitination is increased in presence of retinoic acid. Deubiquitinated by USP7; leading to its nuclear exclusion. Monoubiquitination of one of either Lys-13 and Lys-289 amino acid is sufficient to modulate PTEN compartmentalization. Ubiquitinated by XIAP/BIRC4.</text>
</comment>
<comment type="PTM">
    <text evidence="52">Ubiquitinated by the DCX(DCAF13) E3 ubiquitin ligase complex, leading to its degradation.</text>
</comment>
<comment type="PTM">
    <text evidence="53">ISGylated. ISGylation promotes PTEN degradation.</text>
</comment>
<comment type="disease" evidence="6 7 8 14 16 19 21 27 36 41 46 57 59 61 63 64 65 66 67 68 71 72 73 74 75">
    <disease id="DI-01440">
        <name>Cowden syndrome 1</name>
        <acronym>CWS1</acronym>
        <description>An autosomal dominant hamartomatous polyposis syndrome with age-related penetrance. Cowden syndrome is characterized by hamartomatous lesions affecting derivatives of ectodermal, mesodermal and endodermal layers, macrocephaly, facial trichilemmomas (benign tumors of the hair follicle infundibulum), acral keratoses, papillomatous papules, and elevated risk for development of several types of malignancy, particularly breast carcinoma in women and thyroid carcinoma in both men and women. Colon cancer and renal cell carcinoma have also been reported. Hamartomas can be found in virtually every organ, but most commonly in the skin, gastrointestinal tract, breast and thyroid.</description>
        <dbReference type="MIM" id="158350"/>
    </disease>
    <text>The disease is caused by variants affecting the gene represented in this entry.</text>
</comment>
<comment type="disease">
    <disease id="DI-01903">
        <name>Lhermitte-Duclos disease</name>
        <acronym>LDD</acronym>
        <description>A rare disease characterized by the occurrence of a slowly enlarging mass within the cerebellar cortex corresponding histologically to a cerebellar hamartoma. It manifests, most commonly in the third and fourth decades of life, with increased intracranial pressure, headache, nausea, cerebellar dysfunction, occlusive hydrocephalus, ataxia, visual disturbances and other cranial nerve palsies. Various associated abnormalities may be present such as megalencephaly, microgyria, hydromyelia, polydactyly, partial gigantism, macroglossia. LDD is part of the PTEN hamartoma tumor syndromes spectrum that also includes Cowden syndrome.</description>
        <dbReference type="MIM" id="158350"/>
    </disease>
    <text>The disease is caused by variants affecting the gene represented in this entry.</text>
</comment>
<comment type="disease" evidence="24">
    <disease id="DI-01696">
        <name>Squamous cell carcinoma of the head and neck</name>
        <acronym>HNSCC</acronym>
        <description>A non-melanoma skin cancer affecting the head and neck. The hallmark of cutaneous SCC is malignant transformation of normal epidermal keratinocytes.</description>
        <dbReference type="MIM" id="275355"/>
    </disease>
    <text>The disease is caused by variants affecting the gene represented in this entry.</text>
</comment>
<comment type="disease" evidence="32">
    <disease id="DI-01526">
        <name>Endometrial cancer</name>
        <acronym>ENDMC</acronym>
        <description>A malignancy of endometrium, the mucous lining of the uterus. Most endometrial cancers are adenocarcinomas, cancers that begin in cells that make and release mucus and other fluids.</description>
        <dbReference type="MIM" id="608089"/>
    </disease>
    <text>Disease susceptibility is associated with variants affecting the gene represented in this entry.</text>
</comment>
<comment type="disease">
    <text>PTEN mutations are found in a subset of patients with Proteus syndrome, a genetically heterogeneous condition. The molecular diagnosis of PTEN mutation positive cases classifies Proteus syndrome patients as part of the PTEN hamartoma syndrome spectrum. As such, patients surviving the early years of Proteus syndrome are likely at a greater risk of developing malignancies.</text>
</comment>
<comment type="disease" evidence="25">
    <disease id="DI-02567">
        <name>Glioma 2</name>
        <acronym>GLM2</acronym>
        <description>Gliomas are benign or malignant central nervous system neoplasms derived from glial cells. They comprise astrocytomas and glioblastoma multiforme that are derived from astrocytes, oligodendrogliomas derived from oligodendrocytes and ependymomas derived from ependymocytes.</description>
        <dbReference type="MIM" id="613028"/>
    </disease>
    <text>Disease susceptibility is associated with variants affecting the gene represented in this entry.</text>
</comment>
<comment type="disease" evidence="50 55">
    <disease id="DI-02663">
        <name>Prostate cancer</name>
        <acronym>PC</acronym>
        <description>A malignancy originating in tissues of the prostate. Most prostate cancers are adenocarcinomas that develop in the acini of the prostatic ducts. Other rare histopathologic types of prostate cancer that occur in approximately 5% of patients include small cell carcinoma, mucinous carcinoma, prostatic ductal carcinoma, transitional cell carcinoma, squamous cell carcinoma, basal cell carcinoma, adenoid cystic carcinoma (basaloid), signet-ring cell carcinoma and neuroendocrine carcinoma.</description>
        <dbReference type="MIM" id="176807"/>
    </disease>
    <text>Disease susceptibility is associated with variants affecting the gene represented in this entry.</text>
</comment>
<comment type="disease" evidence="28 43 51">
    <disease id="DI-01924">
        <name>Macrocephaly/autism syndrome</name>
        <acronym>MCEPHAS</acronym>
        <description>Patients have autism spectrum disorders and macrocephaly, with head circumferences ranging from +2.5 to +8 SD for age and sex (average head circumference +4.0 SD).</description>
        <dbReference type="MIM" id="605309"/>
    </disease>
    <text>The disease is caused by variants affecting the gene represented in this entry.</text>
</comment>
<comment type="disease">
    <text>A microdeletion of chromosome 10q23 involving BMPR1A and PTEN is a cause of chromosome 10q23 deletion syndrome, which shows overlapping features of the following three disorders: Bannayan-Zonana syndrome, Cowden disease and juvenile polyposis syndrome.</text>
</comment>
<comment type="miscellaneous">
    <molecule>Isoform alpha</molecule>
    <text evidence="78">Produced by alternative initiation at an upstream CTG start codon. May contain a signal peptide at positions 1-21.</text>
</comment>
<comment type="similarity">
    <text evidence="78">Belongs to the PTEN phosphatase protein family.</text>
</comment>
<comment type="online information" name="Atlas of Genetics and Cytogenetics in Oncology and Haematology">
    <link uri="https://atlasgeneticsoncology.org/gene/158/PTEN"/>
</comment>
<organism>
    <name type="scientific">Homo sapiens</name>
    <name type="common">Human</name>
    <dbReference type="NCBI Taxonomy" id="9606"/>
    <lineage>
        <taxon>Eukaryota</taxon>
        <taxon>Metazoa</taxon>
        <taxon>Chordata</taxon>
        <taxon>Craniata</taxon>
        <taxon>Vertebrata</taxon>
        <taxon>Euteleostomi</taxon>
        <taxon>Mammalia</taxon>
        <taxon>Eutheria</taxon>
        <taxon>Euarchontoglires</taxon>
        <taxon>Primates</taxon>
        <taxon>Haplorrhini</taxon>
        <taxon>Catarrhini</taxon>
        <taxon>Hominidae</taxon>
        <taxon>Homo</taxon>
    </lineage>
</organism>
<proteinExistence type="evidence at protein level"/>
<feature type="initiator methionine" description="Removed" evidence="84">
    <location>
        <position position="1"/>
    </location>
</feature>
<feature type="chain" id="PRO_0000215904" description="Phosphatidylinositol 3,4,5-trisphosphate 3-phosphatase and dual-specificity protein phosphatase PTEN">
    <location>
        <begin position="2"/>
        <end position="403"/>
    </location>
</feature>
<feature type="domain" description="Phosphatase tensin-type" evidence="4">
    <location>
        <begin position="14"/>
        <end position="185"/>
    </location>
</feature>
<feature type="domain" description="C2 tensin-type" evidence="3">
    <location>
        <begin position="190"/>
        <end position="350"/>
    </location>
</feature>
<feature type="region of interest" description="Required for interaction with NOP53" evidence="27">
    <location>
        <begin position="338"/>
        <end position="348"/>
    </location>
</feature>
<feature type="region of interest" description="Disordered" evidence="5">
    <location>
        <begin position="352"/>
        <end position="403"/>
    </location>
</feature>
<feature type="short sequence motif" description="PDZ domain-binding" evidence="1">
    <location>
        <begin position="401"/>
        <end position="403"/>
    </location>
</feature>
<feature type="compositionally biased region" description="Low complexity" evidence="5">
    <location>
        <begin position="360"/>
        <end position="369"/>
    </location>
</feature>
<feature type="compositionally biased region" description="Acidic residues" evidence="5">
    <location>
        <begin position="383"/>
        <end position="393"/>
    </location>
</feature>
<feature type="active site" description="Phosphocysteine intermediate" evidence="4">
    <location>
        <position position="124"/>
    </location>
</feature>
<feature type="modified residue" description="N-acetylthreonine" evidence="84">
    <location>
        <position position="2"/>
    </location>
</feature>
<feature type="modified residue" description="Phosphoserine" evidence="1">
    <location>
        <position position="294"/>
    </location>
</feature>
<feature type="modified residue" description="Phosphothreonine" evidence="49">
    <location>
        <position position="319"/>
    </location>
</feature>
<feature type="modified residue" description="Phosphothreonine" evidence="49">
    <location>
        <position position="321"/>
    </location>
</feature>
<feature type="modified residue" description="Phosphotyrosine; by FRK" evidence="37">
    <location>
        <position position="336"/>
    </location>
</feature>
<feature type="modified residue" description="Phosphothreonine; by GSK3-beta and PLK3" evidence="26 40 85">
    <location>
        <position position="366"/>
    </location>
</feature>
<feature type="modified residue" description="Phosphoserine; by CK2 and PLK3" evidence="18 26 40">
    <location>
        <position position="370"/>
    </location>
</feature>
<feature type="modified residue" description="Phosphoserine; by ROCK1 and CK2" evidence="18">
    <location>
        <position position="380"/>
    </location>
</feature>
<feature type="modified residue" description="Phosphothreonine; by ROCK1 and CK2" evidence="18">
    <location>
        <position position="382"/>
    </location>
</feature>
<feature type="modified residue" description="Phosphothreonine; by ROCK1 and CK2" evidence="18">
    <location>
        <position position="383"/>
    </location>
</feature>
<feature type="modified residue" description="Phosphoserine; by CK2" evidence="18 26">
    <location>
        <position position="385"/>
    </location>
</feature>
<feature type="modified residue" description="Phosphothreonine" evidence="11">
    <location>
        <position position="401"/>
    </location>
</feature>
<feature type="cross-link" description="Glycyl lysine isopeptide (Lys-Gly) (interchain with G-Cter in ubiquitin)" evidence="36">
    <location>
        <position position="13"/>
    </location>
</feature>
<feature type="cross-link" description="Glycyl lysine isopeptide (Lys-Gly) (interchain with G-Cter in ubiquitin)" evidence="36">
    <location>
        <position position="289"/>
    </location>
</feature>
<feature type="splice variant" id="VSP_055420" description="In isoform alpha." evidence="78">
    <original>M</original>
    <variation>MERGGEAAAAAAAAAAAPGRGSESPVTISRAGNAGELVSPLLLPPTRRRRRRHIQGPGPVLNLPSAAAAPPVARAPEAAGGGSRSEDYSSSPHSAAAAARPLAAEEKQAQSLQPSSSRRSSHYPAAVQSQAAAERGASATAKSRAISILQKKPRHQQLLPSLSSFFFSHRLPDM</variation>
    <location>
        <position position="1"/>
    </location>
</feature>
<feature type="splice variant" id="VSP_055421" description="In isoform 3." evidence="77">
    <original>RFLDSKHKNHYKIYNL</original>
    <variation>S</variation>
    <location>
        <begin position="55"/>
        <end position="70"/>
    </location>
</feature>
<feature type="splice variant" id="VSP_055422" description="In isoform 3." evidence="77">
    <original>GVTIPSQRRYVYYYSYLLKNHLDYRP</original>
    <variation>ADPTGGIPDKGIIVIGDGSSMDVIAP</variation>
    <location>
        <begin position="165"/>
        <end position="190"/>
    </location>
</feature>
<feature type="splice variant" id="VSP_055423" description="In isoform 3." evidence="77">
    <location>
        <begin position="191"/>
        <end position="403"/>
    </location>
</feature>
<feature type="sequence variant" id="VAR_026248" description="Retains phosphatase activity towards Ins(1,3,4,5)P4 and PtdIns(3,4,5)P3; retains the ability to bind phospholipid membranes." evidence="16">
    <original>S</original>
    <variation>N</variation>
    <location>
        <position position="10"/>
    </location>
</feature>
<feature type="sequence variant" id="VAR_007457" description="In CWS1; also found in glioma; dbSNP:rs1064794096." evidence="41 56">
    <original>R</original>
    <variation>S</variation>
    <location>
        <position position="15"/>
    </location>
</feature>
<feature type="sequence variant" id="VAR_026249" description="Loss of phosphatase activity towards Ins(1,3,4,5)P4; retains the ability to bind phospholipid membranes." evidence="16">
    <original>Y</original>
    <variation>C</variation>
    <location>
        <position position="16"/>
    </location>
</feature>
<feature type="sequence variant" id="VAR_018100" description="In malignant melanoma; somatic mutation; dbSNP:rs121909233." evidence="17">
    <original>D</original>
    <variation>N</variation>
    <location>
        <position position="19"/>
    </location>
</feature>
<feature type="sequence variant" id="VAR_026250" description="Reduced phosphatase activity towards Ins(1,3,4,5)P4; retains phosphatase activity towards PtdIns(3,4,5)P3; dbSNP:rs1064795967." evidence="16">
    <original>G</original>
    <variation>E</variation>
    <location>
        <position position="20"/>
    </location>
</feature>
<feature type="sequence variant" id="VAR_026251" description="Loss of phosphatase activity towards Ins(1,3,4,5)P4; dbSNP:rs886041877." evidence="16">
    <original>Y</original>
    <variation>S</variation>
    <location>
        <position position="27"/>
    </location>
</feature>
<feature type="sequence variant" id="VAR_008733" description="In CWS1; dbSNP:rs1554893765." evidence="7">
    <location>
        <position position="33"/>
    </location>
</feature>
<feature type="sequence variant" id="VAR_008734" description="In CWS1." evidence="8 21 41">
    <original>A</original>
    <variation>D</variation>
    <location>
        <position position="34"/>
    </location>
</feature>
<feature type="sequence variant" id="VAR_008036" description="In CWS1; dbSNP:rs121909225." evidence="65">
    <original>M</original>
    <variation>R</variation>
    <location>
        <position position="35"/>
    </location>
</feature>
<feature type="sequence variant" id="VAR_007458" description="In ENDMC; also found in glioma; dbSNP:rs1554893792." evidence="32 56">
    <original>G</original>
    <variation>E</variation>
    <location>
        <position position="36"/>
    </location>
</feature>
<feature type="sequence variant" id="VAR_026252" description="In CWS1; also found in a patient with endometrial hyperplasia; dbSNP:rs786204854." evidence="14 41 70">
    <original>G</original>
    <variation>R</variation>
    <location>
        <position position="36"/>
    </location>
</feature>
<feature type="sequence variant" id="VAR_007459" description="In glioma; retains phosphatase activity towards Ins(1,3,4,5)P4 and PtdIns(3,4,5)P3; retains the ability to bind phospholipid membranes." evidence="56">
    <original>L</original>
    <variation>R</variation>
    <location>
        <position position="42"/>
    </location>
</feature>
<feature type="sequence variant" id="VAR_011587" description="In CWS1; dbSNP:rs786204855." evidence="21">
    <original>R</original>
    <variation>G</variation>
    <location>
        <position position="47"/>
    </location>
</feature>
<feature type="sequence variant" id="VAR_007460" description="In glioma; likely pathogenic; loss of protein phosphatase activity; dbSNP:rs786202398." evidence="56 60">
    <original>L</original>
    <variation>W</variation>
    <location>
        <position position="57"/>
    </location>
</feature>
<feature type="sequence variant" id="VAR_018101" description="Found in a patient with congenital cardiac disease, macrocephaly, ventriculomegaly, skeletal defects, anal atresia, tracheoesophageal fistula, renal anomalies; likely pathogenic; dbSNP:rs121909236." evidence="23">
    <original>H</original>
    <variation>D</variation>
    <location>
        <position position="61"/>
    </location>
</feature>
<feature type="sequence variant" id="VAR_026253" description="In CWS1; loss of phosphatase activity towards Ins(1,3,4,5)P4; dbSNP:rs398123316." evidence="16 41 46">
    <original>H</original>
    <variation>R</variation>
    <location>
        <position position="61"/>
    </location>
</feature>
<feature type="sequence variant" id="VAR_078705" description="In MCEPHAS." evidence="51">
    <location>
        <begin position="65"/>
        <end position="403"/>
    </location>
</feature>
<feature type="sequence variant" id="VAR_007461" description="In CWS1." evidence="66">
    <original>I</original>
    <variation>R</variation>
    <location>
        <position position="67"/>
    </location>
</feature>
<feature type="sequence variant" id="VAR_007462" description="In CWS1; loss of phosphatase activity towards Ins(1,3,4,5)P4 and PtdIns(3,4,5)P3; retains the ability to bind phospholipid membranes; dbSNP:rs398123317." evidence="8 16 21 41 68">
    <original>Y</original>
    <variation>H</variation>
    <location>
        <position position="68"/>
    </location>
</feature>
<feature type="sequence variant" id="VAR_018102" description="In CWS1; dbSNP:rs121909226." evidence="74">
    <original>L</original>
    <variation>P</variation>
    <location>
        <position position="70"/>
    </location>
</feature>
<feature type="sequence variant" id="VAR_026254" description="In CWS1; loss of phosphatase activity towards Ins(1,3,4,5)P4." evidence="16">
    <original>C</original>
    <variation>Y</variation>
    <location>
        <position position="71"/>
    </location>
</feature>
<feature type="sequence variant" id="VAR_032634" description="In MCEPHAS; dbSNP:rs121909238." evidence="28">
    <original>H</original>
    <variation>R</variation>
    <location>
        <position position="93"/>
    </location>
</feature>
<feature type="sequence variant" id="VAR_026255" description="In CWS1; dbSNP:rs786204927." evidence="16 46">
    <original>H</original>
    <variation>Y</variation>
    <location>
        <position position="93"/>
    </location>
</feature>
<feature type="sequence variant" id="VAR_026256" description="In CWS1; loss of phosphatase activity towards Ins(1,3,4,5)P4." evidence="16">
    <original>C</original>
    <variation>F</variation>
    <location>
        <position position="105"/>
    </location>
</feature>
<feature type="sequence variant" id="VAR_008735" description="In CWS1; dbSNP:rs587782343." evidence="8 21">
    <original>C</original>
    <variation>Y</variation>
    <location>
        <position position="105"/>
    </location>
</feature>
<feature type="sequence variant" id="VAR_026257" description="In CWS1; also found in glioblastoma; loss of phosphatase activity towards Ins(1,3,4,5)P4; dbSNP:rs57374291." evidence="16 62">
    <original>D</original>
    <variation>Y</variation>
    <location>
        <position position="107"/>
    </location>
</feature>
<feature type="sequence variant" id="VAR_007807" description="In CWS1 and LDD; loss of phosphatase activity towards Ins(1,3,4,5)P4; dbSNP:rs121909230." evidence="6 16 68">
    <original>L</original>
    <variation>P</variation>
    <location>
        <position position="112"/>
    </location>
</feature>
<feature type="sequence variant" id="VAR_026258" description="Loss of phosphatase activity towards Ins(1,3,4,5)P4." evidence="16">
    <original>L</original>
    <variation>R</variation>
    <location>
        <position position="112"/>
    </location>
</feature>
<feature type="sequence variant" id="VAR_011588" description="In multiple cancers; dbSNP:rs139767111." evidence="15">
    <original>V</original>
    <variation>L</variation>
    <location>
        <position position="119"/>
    </location>
</feature>
<feature type="sequence variant" id="VAR_018103" description="In HNSCC; dbSNP:rs121909237." evidence="24">
    <original>A</original>
    <variation>G</variation>
    <location>
        <position position="121"/>
    </location>
</feature>
<feature type="sequence variant" id="VAR_026259" description="In glioblastoma; loss of phosphatase activity towards Ins(1,3,4,5)P4." evidence="16 62">
    <original>A</original>
    <variation>P</variation>
    <location>
        <position position="121"/>
    </location>
</feature>
<feature type="sequence variant" id="VAR_007463" description="In CWS1; dbSNP:rs121909222." evidence="7 61">
    <original>H</original>
    <variation>R</variation>
    <location>
        <position position="123"/>
    </location>
</feature>
<feature type="sequence variant" id="VAR_026260" description="In endometrial cancer; loss of protein phosphatase activity; dbSNP:rs786204931." evidence="60">
    <original>H</original>
    <variation>Y</variation>
    <location>
        <position position="123"/>
    </location>
</feature>
<feature type="sequence variant" id="VAR_007464" description="In CWS1; dbSNP:rs121909223." evidence="7 16 61">
    <original>C</original>
    <variation>R</variation>
    <location>
        <position position="124"/>
    </location>
</feature>
<feature type="sequence variant" id="VAR_018104" description="In CWS1; phosphatase-dead protein with neither lipid nor protein phosphatase activity; loss of phosphatidylinositol-3,4,5-trisphosphate 3-phosphatase activity; dbSNP:rs121909223." evidence="19 67 73">
    <original>C</original>
    <variation>S</variation>
    <location>
        <position position="124"/>
    </location>
</feature>
<feature type="sequence variant" id="VAR_076551" description="In a patient with prostate cancer; reduced phosphatase activity towards PtdIns(3,4,5); shifts its activity from phosphatidylinositol phosphate 3-phosphatase to phosphatidylinositol phosphate 5-phosphatase; disrupts PI3K/ATK signaling; reduced cell migration." evidence="50">
    <original>A</original>
    <variation>G</variation>
    <location>
        <position position="126"/>
    </location>
</feature>
<feature type="sequence variant" id="VAR_007465" description="In CWS1; no lipid phosphatase activity but retains protein phosphatase activity; retains ability to inhibit focal adhesion formation; dbSNP:rs121909218." evidence="16 19 41 57 69 73">
    <original>G</original>
    <variation>E</variation>
    <location>
        <position position="129"/>
    </location>
</feature>
<feature type="sequence variant" id="VAR_007466" description="In glioblastoma; severely reduced protein phosphatase activity; loss of phosphatase activity towards Ins(1,3,4,5)P4; dbSNP:rs786204929." evidence="16 55 60 62">
    <original>G</original>
    <variation>R</variation>
    <location>
        <position position="129"/>
    </location>
</feature>
<feature type="sequence variant" id="VAR_026261" description="In CWS1; loss of phosphatase activity towards Ins(1,3,4,5)P4 and PtdIns(3,4,5)P3; dbSNP:rs121909224." evidence="16 41 46">
    <original>R</original>
    <variation>G</variation>
    <location>
        <position position="130"/>
    </location>
</feature>
<feature type="sequence variant" id="VAR_007467" description="In CWS1; also found in endometrial hyperplasia; loss of phosphatase activity towards Ins(1,3,4,5)P4; retains ability to bind phospholipid membranes; dbSNP:rs121909229." evidence="16 41 46 70">
    <original>R</original>
    <variation>L</variation>
    <location>
        <position position="130"/>
    </location>
</feature>
<feature type="sequence variant" id="VAR_007468" description="In CWS1; loss of phosphatase activity towards Ins(1,3,4,5)P4; retains ability to bind phospholipid membranes; dbSNP:rs121909229." evidence="16 41 46 75">
    <original>R</original>
    <variation>Q</variation>
    <location>
        <position position="130"/>
    </location>
</feature>
<feature type="sequence variant" id="VAR_076762" description="In MCEPHAS; dbSNP:rs397514560." evidence="43">
    <original>T</original>
    <variation>I</variation>
    <location>
        <position position="131"/>
    </location>
</feature>
<feature type="sequence variant" id="VAR_032635" description="In one patient with clinical findings suggesting hamartoma tumor syndrome; dbSNP:rs121909241." evidence="33">
    <original>G</original>
    <variation>V</variation>
    <location>
        <position position="132"/>
    </location>
</feature>
<feature type="sequence variant" id="VAR_026262" description="Loss of phosphatase activity towards Ins(1,3,4,5)P3." evidence="16">
    <original>V</original>
    <variation>I</variation>
    <location>
        <position position="133"/>
    </location>
</feature>
<feature type="sequence variant" id="VAR_007469" description="In prostate cancer; no effect on protein phosphatase activity; reduced phosphatase activity towards Ins(1,3,4,5)P3 but retains PtdIns(3,4,5)P3 phosphatase activity." evidence="16 55 60">
    <original>M</original>
    <variation>L</variation>
    <location>
        <position position="134"/>
    </location>
</feature>
<feature type="sequence variant" id="VAR_008736" description="In CWS1; dbSNP:rs587782360." evidence="8 21">
    <original>I</original>
    <variation>V</variation>
    <location>
        <position position="135"/>
    </location>
</feature>
<feature type="sequence variant" id="VAR_007808" description="In CWS1; loss of phosphatase activity towards Ins(1,3,4,5)P3; dbSNP:rs786204859." evidence="16 41 71">
    <original>C</original>
    <variation>Y</variation>
    <location>
        <position position="136"/>
    </location>
</feature>
<feature type="sequence variant" id="VAR_008737" description="In CWS1." evidence="63">
    <original>A</original>
    <variation>AN</variation>
    <location>
        <position position="137"/>
    </location>
</feature>
<feature type="sequence variant" id="VAR_026263" description="In CWS1; loss of phosphatase activity towards Ins(1,3,4,5)P4; dbSNP:rs1060500126." evidence="16">
    <original>Y</original>
    <variation>C</variation>
    <location>
        <position position="155"/>
    </location>
</feature>
<feature type="sequence variant" id="VAR_011589" description="In multiple cancers." evidence="15">
    <original>V</original>
    <variation>L</variation>
    <location>
        <position position="158"/>
    </location>
</feature>
<feature type="sequence variant" id="VAR_008739" description="In CWS1." evidence="7">
    <original>G</original>
    <variation>E</variation>
    <location>
        <position position="165"/>
    </location>
</feature>
<feature type="sequence variant" id="VAR_026264" description="In CWS1; also found in glioblastoma; severely reduced protein phosphatase activity; loss of phosphatase activity towards Ins(1,3,4,5)P4; retains ability to bind phospholipid membranes; dbSNP:rs587782603." evidence="16 41 60 62">
    <original>G</original>
    <variation>R</variation>
    <location>
        <position position="165"/>
    </location>
</feature>
<feature type="sequence variant" id="VAR_008738" description="In CWS1; dbSNP:rs786204863." evidence="66">
    <original>G</original>
    <variation>V</variation>
    <location>
        <position position="165"/>
    </location>
</feature>
<feature type="sequence variant" id="VAR_076763" description="In MCEPHAS; dbSNP:rs397514559." evidence="43">
    <original>T</original>
    <variation>N</variation>
    <location>
        <position position="167"/>
    </location>
</feature>
<feature type="sequence variant" id="VAR_026265" description="In breast cancer; severely reduced protein phosphatase activity." evidence="60">
    <original>T</original>
    <variation>P</variation>
    <location>
        <position position="167"/>
    </location>
</feature>
<feature type="sequence variant" id="VAR_026266" description="Loss of phosphatase activity towards Ins(1,3,4,5)P4; retains ability to bind phospholipid membranes." evidence="16">
    <original>S</original>
    <variation>N</variation>
    <location>
        <position position="170"/>
    </location>
</feature>
<feature type="sequence variant" id="VAR_007470" description="In CWS1; severely reduced protein phosphatase activity; loss of phosphatase activity towards Ins(1,3,4,5)P4; dbSNP:rs121909221." evidence="8 16 21 41 59 60">
    <original>S</original>
    <variation>R</variation>
    <location>
        <position position="170"/>
    </location>
</feature>
<feature type="sequence variant" id="VAR_026267" description="In CWS1; also found in endometrial hyperplasia; loss of phosphatase activity towards Ins(1,3,4,5)P4 and PtdIns(3,4,5)P3; retains ability to bind phospholipid membranes; dbSNP:rs121913293." evidence="16 46 70">
    <original>R</original>
    <variation>C</variation>
    <location>
        <position position="173"/>
    </location>
</feature>
<feature type="sequence variant" id="VAR_026268" description="Loss of phosphatase activity towards Ins(1,3,4,5)P4; dbSNP:rs121913294." evidence="16">
    <original>R</original>
    <variation>H</variation>
    <location>
        <position position="173"/>
    </location>
</feature>
<feature type="sequence variant" id="VAR_026269" description="Loss of phosphatase activity towards Ins(1,3,4,5)P4; dbSNP:rs121913294." evidence="16">
    <original>R</original>
    <variation>P</variation>
    <location>
        <position position="173"/>
    </location>
</feature>
<feature type="sequence variant" id="VAR_026270" description="Found in a thyroid tumor; somatic variant; loss of phosphatase activity towards Ins(1,3,4,5)P4; dbSNP:rs587782316." evidence="16 54">
    <original>Y</original>
    <variation>N</variation>
    <location>
        <position position="174"/>
    </location>
</feature>
<feature type="sequence variant" id="VAR_026271" description="In endometrial hyperplasia." evidence="70">
    <original>V</original>
    <variation>A</variation>
    <location>
        <position position="191"/>
    </location>
</feature>
<feature type="sequence variant" id="VAR_018105" description="In malignant melanoma; somatic mutation; dbSNP:rs121909234." evidence="17">
    <original>V</original>
    <variation>I</variation>
    <location>
        <position position="217"/>
    </location>
</feature>
<feature type="sequence variant" id="VAR_026272" description="Reduced phosphatase activity towards Ins(1,3,4,5)P4; retains PtdIns(3,4,5)P3 phosphatase activity; dbSNP:rs905615413." evidence="16">
    <original>S</original>
    <variation>F</variation>
    <location>
        <position position="227"/>
    </location>
</feature>
<feature type="sequence variant" id="VAR_018106" description="In GLM2; uncertain significance; not capable of inducing apoptosis; induced increased cell proliferation; led to high constitutive AKT1 activation which could not be increased further by stimulation with insulin; dbSNP:rs121909235." evidence="25">
    <original>R</original>
    <variation>Q</variation>
    <location>
        <position position="234"/>
    </location>
</feature>
<feature type="sequence variant" id="VAR_032636" description="In MCEPHAS; dbSNP:rs121909240." evidence="28">
    <original>F</original>
    <variation>S</variation>
    <location>
        <position position="241"/>
    </location>
</feature>
<feature type="sequence variant" id="VAR_008740" description="In CWS1; dbSNP:rs587782350." evidence="8">
    <original>P</original>
    <variation>L</variation>
    <location>
        <position position="246"/>
    </location>
</feature>
<feature type="sequence variant" id="VAR_026273" description="Loss of phosphatase activity towards Ins(1,3,4,5)P4; retains ability to bind phospholipid membranes." evidence="16">
    <original>G</original>
    <variation>C</variation>
    <location>
        <position position="251"/>
    </location>
</feature>
<feature type="sequence variant" id="VAR_032637" description="In MCEPHAS and CWS1; dbSNP:rs121909239." evidence="28 41">
    <original>D</original>
    <variation>G</variation>
    <location>
        <position position="252"/>
    </location>
</feature>
<feature type="sequence variant" id="VAR_008741" description="In CWS1; reduced phosphatase activity towards Ins(1,3,4,5)P4; retains ability to bind phospholipid membranes; predominantly nuclear; dbSNP:rs562015640." evidence="16 36 72">
    <original>K</original>
    <variation>E</variation>
    <location>
        <position position="289"/>
    </location>
</feature>
<feature type="sequence variant" id="VAR_025167" description="In dbSNP:rs35600253." evidence="76">
    <original>V</original>
    <variation>L</variation>
    <location>
        <position position="290"/>
    </location>
</feature>
<feature type="sequence variant" id="VAR_026274" description="In glioma; reduced tumor suppressor activity; fails to inactivate AKT/PKB." evidence="9 56">
    <location>
        <position position="319"/>
    </location>
</feature>
<feature type="sequence variant" id="VAR_026275" description="In CWS1; reduced phosphatase activity towards Ins(1,3,4,5)P4; retains ability to bind phospholipid membranes." evidence="16">
    <original>D</original>
    <variation>G</variation>
    <location>
        <position position="331"/>
    </location>
</feature>
<feature type="sequence variant" id="VAR_026276" description="In CWS1; loss of interaction with NOP53; decreased phosphorylation at S-380; decreased stability; loss of phosphatase activity towards Ins(1,3,4,5)P4; dbSNP:rs1554825652." evidence="16 27">
    <original>F</original>
    <variation>V</variation>
    <location>
        <position position="341"/>
    </location>
</feature>
<feature type="sequence variant" id="VAR_026277" description="In CWS1; reduced phosphatase activity towards Ins(1,3,4,5)P4 but PtdIns(3,4,5)P3 phosphatase activity is similar to wild-type; dbSNP:rs398123314." evidence="16">
    <original>K</original>
    <variation>N</variation>
    <location>
        <position position="342"/>
    </location>
</feature>
<feature type="sequence variant" id="VAR_008742" description="In CWS1; loss of interaction with NOP53; decreased phosphorylation at S-380; decreased stability; loss of phosphatase activity towards Ins(1,3,4,5)P4." evidence="16 27 64">
    <original>V</original>
    <variation>E</variation>
    <location>
        <position position="343"/>
    </location>
</feature>
<feature type="sequence variant" id="VAR_026278" description="In glioblastoma; reduced tumor suppressor activity; loss of interaction with NOP53; decreased phosphorylation at S-380; decreased stability; loss of phosphatase activity towards Ins(1,3,4,5)P4; reduced ability to inactivate AKT/PKB; retains ability to bind phospholipid membranes." evidence="9 16 27 62">
    <original>L</original>
    <variation>Q</variation>
    <location>
        <position position="345"/>
    </location>
</feature>
<feature type="sequence variant" id="VAR_008743" description="In CWS1; reduced phosphatase activity towards Ins(1,3,4,5)P4." evidence="16 41 64">
    <original>F</original>
    <variation>L</variation>
    <location>
        <position position="347"/>
    </location>
</feature>
<feature type="sequence variant" id="VAR_026279" description="In endometrial hyperplasia; reduced phosphatase activity towards PtdIns(3,4,5)P3; mildly reduced tumor suppressor activity; reduced ability to inactivate AKT/PKB." evidence="9 70">
    <original>T</original>
    <variation>I</variation>
    <location>
        <position position="348"/>
    </location>
</feature>
<feature type="sequence variant" id="VAR_026280" description="Retains Ins(1,3,4,5)P4 and PtdIns(3,4,5)P3 phosphatase activity; retains ability to bind phospholipid membranes." evidence="16">
    <original>V</original>
    <variation>G</variation>
    <location>
        <position position="369"/>
    </location>
</feature>
<feature type="sequence variant" id="VAR_026281" description="Retains Ins(1,3,4,5)P4 and PtdIns(3,4,5)P3 phosphatase activity; retains ability to bind phospholipid membranes." evidence="16">
    <original>T</original>
    <variation>I</variation>
    <location>
        <position position="401"/>
    </location>
</feature>
<feature type="mutagenesis site" description="Prevents expression of isoform 1 and increased expression of isoform alpha." evidence="45">
    <original>M</original>
    <variation>I</variation>
    <location>
        <position position="1"/>
    </location>
</feature>
<feature type="mutagenesis site" description="Nuclear. Cytoplasmic; when associated with E-289. Shows less tumor suppressive ability; when associated with E-289." evidence="36">
    <original>K</original>
    <variation>E</variation>
    <location>
        <position position="13"/>
    </location>
</feature>
<feature type="mutagenesis site" description="700-fold reduction in phosphatase activity towards PtdIns(3,4,5)P3. Loss of protein phosphatase activity. Unable to inhibit focal adhesion formation." evidence="10 69">
    <original>D</original>
    <variation>A</variation>
    <location>
        <position position="92"/>
    </location>
</feature>
<feature type="mutagenesis site" description="75% reduction in phosphatase activity towards PtdIns(3,4,5)P3. Modest reduction in phosphatase activity towards PtdIns(3,4)P2." evidence="10">
    <original>H</original>
    <variation>A</variation>
    <location>
        <position position="93"/>
    </location>
</feature>
<feature type="mutagenesis site" description="Loss of protein phosphatase activity. Unable to inhibit focal adhesion formation." evidence="69">
    <original>C</original>
    <variation>A</variation>
    <location>
        <position position="124"/>
    </location>
</feature>
<feature type="mutagenesis site" description="Reduced phosphatase activity towards PtdIns(3,4,5)P3, PtdIns(3,4)P2 and PtdIns(3)P." evidence="10">
    <original>K</original>
    <variation>M</variation>
    <location>
        <position position="125"/>
    </location>
</feature>
<feature type="mutagenesis site" description="Does not reduce phosphatase activity towards PtdIns(3,4,5)P3 and PtdIns(3,4)P2." evidence="50">
    <original>A</original>
    <variation>P</variation>
    <location>
        <position position="126"/>
    </location>
</feature>
<feature type="mutagenesis site" description="Does not reduce phosphatase activity towards PtdIns(3,4,5)P3 and PtdIns(3,4)P2." evidence="50">
    <original>A</original>
    <variation>S</variation>
    <location>
        <position position="126"/>
    </location>
</feature>
<feature type="mutagenesis site" description="Does not reduce phosphatase activity towards PtdIns(3,4,5)P3 and PtdIns(3,4)P2." evidence="50">
    <original>A</original>
    <variation>V</variation>
    <location>
        <position position="126"/>
    </location>
</feature>
<feature type="mutagenesis site" description="85% reduction in phosphatase activity towards PtdIns(3,4,5)P3." evidence="10">
    <original>K</original>
    <variation>M</variation>
    <location>
        <position position="128"/>
    </location>
</feature>
<feature type="mutagenesis site" description="Does not reduce phosphatase activity towards PtdIns(3,4,5)P3." evidence="10">
    <original>K</original>
    <variation>R</variation>
    <location>
        <position position="128"/>
    </location>
</feature>
<feature type="mutagenesis site" description="Does not affect the ability to inhibit AKT/PKB activation." evidence="73">
    <original>R</original>
    <variation>M</variation>
    <location>
        <position position="130"/>
    </location>
</feature>
<feature type="mutagenesis site" description="60% reduction in phosphatase activity towards PtdIns(3,4,5)P3." evidence="10">
    <original>T</original>
    <variation>A</variation>
    <variation>D</variation>
    <location>
        <position position="167"/>
    </location>
</feature>
<feature type="mutagenesis site" description="75% reduction in phosphatase activity towards PtdIns(3,4,5)P3." evidence="10">
    <original>Q</original>
    <variation>A</variation>
    <variation>E</variation>
    <location>
        <position position="171"/>
    </location>
</feature>
<feature type="mutagenesis site" description="No effect on interaction with DLC1 or p85." evidence="49">
    <original>S</original>
    <variation>A</variation>
    <location>
        <position position="229"/>
    </location>
</feature>
<feature type="mutagenesis site" description="No effect on interaction with DLC1 or p85." evidence="49">
    <original>T</original>
    <variation>A</variation>
    <location>
        <position position="232"/>
    </location>
</feature>
<feature type="mutagenesis site" description="Reduces the growth suppression activity and cells show anchorage-independent growth. Reduces binding to phospholipid membranes in vitro. Phosphatase activity towards PtdIns(3,4,5)P3 is not affected." evidence="10">
    <original>KMLKKDK</original>
    <variation>AAGAADA</variation>
    <location>
        <begin position="263"/>
        <end position="269"/>
    </location>
</feature>
<feature type="mutagenesis site" description="Cytoplasmic; when associated with E-13. Shows less tumor suppressive ability; when associated with E-13." evidence="36">
    <original>K</original>
    <variation>E</variation>
    <location>
        <position position="289"/>
    </location>
</feature>
<feature type="mutagenesis site" description="Reduces phosphorylation of the C2 tensin-like domain and abolishes interaction with DLC1 following EGF stimulation. Abolishes phosphorylation of the C2 tensin-like domain; when associated with A-321." evidence="49">
    <original>T</original>
    <variation>A</variation>
    <location>
        <position position="319"/>
    </location>
</feature>
<feature type="mutagenesis site" description="Constitutive interaction with DLC1." evidence="49">
    <original>T</original>
    <variation>E</variation>
    <location>
        <position position="319"/>
    </location>
</feature>
<feature type="mutagenesis site" description="Constitutive interaction with DLC1 and interaction with p85 following EGF stimulation." evidence="49">
    <original>T</original>
    <variation>Y</variation>
    <location>
        <position position="319"/>
    </location>
</feature>
<feature type="mutagenesis site" description="Reduces phosphorylation of the C2 tensin-like domain and abolishes interaction with DLC1 following EGF stimulation. Abolishes phosphorylation of the C2 tensin-like domain; when associated with A-319." evidence="49">
    <original>T</original>
    <variation>A</variation>
    <location>
        <position position="321"/>
    </location>
</feature>
<feature type="mutagenesis site" description="Constitutive interaction with DLC1." evidence="49">
    <original>T</original>
    <variation>E</variation>
    <location>
        <position position="321"/>
    </location>
</feature>
<feature type="mutagenesis site" description="Reduces growth suppression activity and promotes anchorage-independent growth. Reduces binding to phospholipid membranes in vitro; phosphatase activity towards PtdIns(3,4,5)P3 is not affected." evidence="10">
    <original>KANKDKANR</original>
    <variation>AAGADAANA</variation>
    <location>
        <begin position="327"/>
        <end position="335"/>
    </location>
</feature>
<feature type="mutagenesis site" description="Significantly lower phosphatase activity, reduced protein stability and decreased growth-inhibitory effect." evidence="37">
    <original>Y</original>
    <variation>F</variation>
    <location>
        <position position="336"/>
    </location>
</feature>
<feature type="mutagenesis site" description="Decreased stability." evidence="40">
    <original>T</original>
    <variation>A</variation>
    <location>
        <position position="366"/>
    </location>
</feature>
<feature type="mutagenesis site" description="Decreased stability." evidence="40">
    <original>S</original>
    <variation>A</variation>
    <location>
        <position position="370"/>
    </location>
</feature>
<feature type="mutagenesis site" description="Loss of DLG1-binding. No effect on MAGI2- and MAST2-binding.">
    <original>T</original>
    <variation>A</variation>
    <location>
        <position position="401"/>
    </location>
</feature>
<feature type="mutagenesis site" description="No effect on MAGI2-, MAST2- and DLG1-binding.">
    <original>K</original>
    <variation>A</variation>
    <location>
        <position position="402"/>
    </location>
</feature>
<feature type="mutagenesis site" description="Loss of DLG1-, MAGI2-, MAGI3- and MAST2-binding. Decrease of protein stability.">
    <original>K</original>
    <variation>W</variation>
    <location>
        <position position="402"/>
    </location>
</feature>
<feature type="mutagenesis site" description="Loss of DLG1-, MAGI2-, MAGI3-, MAST1-, MAST2- and MAST3-binding." evidence="29">
    <original>V</original>
    <variation>A</variation>
    <location>
        <position position="403"/>
    </location>
</feature>
<feature type="helix" evidence="90">
    <location>
        <begin position="8"/>
        <end position="10"/>
    </location>
</feature>
<feature type="turn" evidence="86">
    <location>
        <begin position="19"/>
        <end position="22"/>
    </location>
</feature>
<feature type="strand" evidence="86">
    <location>
        <begin position="23"/>
        <end position="29"/>
    </location>
</feature>
<feature type="strand" evidence="86">
    <location>
        <begin position="32"/>
        <end position="35"/>
    </location>
</feature>
<feature type="strand" evidence="86">
    <location>
        <begin position="39"/>
        <end position="41"/>
    </location>
</feature>
<feature type="strand" evidence="89">
    <location>
        <begin position="44"/>
        <end position="47"/>
    </location>
</feature>
<feature type="helix" evidence="86">
    <location>
        <begin position="50"/>
        <end position="60"/>
    </location>
</feature>
<feature type="strand" evidence="86">
    <location>
        <begin position="61"/>
        <end position="63"/>
    </location>
</feature>
<feature type="strand" evidence="86">
    <location>
        <begin position="65"/>
        <end position="73"/>
    </location>
</feature>
<feature type="helix" evidence="89">
    <location>
        <begin position="78"/>
        <end position="80"/>
    </location>
</feature>
<feature type="strand" evidence="89">
    <location>
        <begin position="81"/>
        <end position="83"/>
    </location>
</feature>
<feature type="strand" evidence="86">
    <location>
        <begin position="85"/>
        <end position="90"/>
    </location>
</feature>
<feature type="helix" evidence="86">
    <location>
        <begin position="98"/>
        <end position="100"/>
    </location>
</feature>
<feature type="helix" evidence="86">
    <location>
        <begin position="101"/>
        <end position="112"/>
    </location>
</feature>
<feature type="turn" evidence="86">
    <location>
        <begin position="113"/>
        <end position="115"/>
    </location>
</feature>
<feature type="strand" evidence="86">
    <location>
        <begin position="118"/>
        <end position="123"/>
    </location>
</feature>
<feature type="strand" evidence="86">
    <location>
        <begin position="125"/>
        <end position="128"/>
    </location>
</feature>
<feature type="helix" evidence="86">
    <location>
        <begin position="129"/>
        <end position="141"/>
    </location>
</feature>
<feature type="helix" evidence="86">
    <location>
        <begin position="148"/>
        <end position="159"/>
    </location>
</feature>
<feature type="strand" evidence="86">
    <location>
        <begin position="161"/>
        <end position="163"/>
    </location>
</feature>
<feature type="helix" evidence="86">
    <location>
        <begin position="169"/>
        <end position="184"/>
    </location>
</feature>
<feature type="strand" evidence="86">
    <location>
        <begin position="192"/>
        <end position="202"/>
    </location>
</feature>
<feature type="strand" evidence="89">
    <location>
        <begin position="206"/>
        <end position="209"/>
    </location>
</feature>
<feature type="strand" evidence="86">
    <location>
        <begin position="213"/>
        <end position="219"/>
    </location>
</feature>
<feature type="strand" evidence="86">
    <location>
        <begin position="222"/>
        <end position="226"/>
    </location>
</feature>
<feature type="strand" evidence="86">
    <location>
        <begin position="232"/>
        <end position="235"/>
    </location>
</feature>
<feature type="strand" evidence="86">
    <location>
        <begin position="238"/>
        <end position="259"/>
    </location>
</feature>
<feature type="strand" evidence="89">
    <location>
        <begin position="262"/>
        <end position="264"/>
    </location>
</feature>
<feature type="strand" evidence="86">
    <location>
        <begin position="268"/>
        <end position="276"/>
    </location>
</feature>
<feature type="helix" evidence="86">
    <location>
        <begin position="277"/>
        <end position="279"/>
    </location>
</feature>
<feature type="strand" evidence="89">
    <location>
        <begin position="280"/>
        <end position="284"/>
    </location>
</feature>
<feature type="strand" evidence="88">
    <location>
        <begin position="310"/>
        <end position="312"/>
    </location>
</feature>
<feature type="strand" evidence="86">
    <location>
        <begin position="315"/>
        <end position="321"/>
    </location>
</feature>
<feature type="helix" evidence="86">
    <location>
        <begin position="322"/>
        <end position="324"/>
    </location>
</feature>
<feature type="helix" evidence="86">
    <location>
        <begin position="328"/>
        <end position="330"/>
    </location>
</feature>
<feature type="strand" evidence="86">
    <location>
        <begin position="335"/>
        <end position="337"/>
    </location>
</feature>
<feature type="strand" evidence="86">
    <location>
        <begin position="342"/>
        <end position="349"/>
    </location>
</feature>
<feature type="strand" evidence="87">
    <location>
        <begin position="395"/>
        <end position="403"/>
    </location>
</feature>
<evidence type="ECO:0000250" key="1">
    <source>
        <dbReference type="UniProtKB" id="O08586"/>
    </source>
</evidence>
<evidence type="ECO:0000250" key="2">
    <source>
        <dbReference type="UniProtKB" id="O54857"/>
    </source>
</evidence>
<evidence type="ECO:0000255" key="3">
    <source>
        <dbReference type="PROSITE-ProRule" id="PRU00589"/>
    </source>
</evidence>
<evidence type="ECO:0000255" key="4">
    <source>
        <dbReference type="PROSITE-ProRule" id="PRU00590"/>
    </source>
</evidence>
<evidence type="ECO:0000256" key="5">
    <source>
        <dbReference type="SAM" id="MobiDB-lite"/>
    </source>
</evidence>
<evidence type="ECO:0000269" key="6">
    <source>
    </source>
</evidence>
<evidence type="ECO:0000269" key="7">
    <source>
    </source>
</evidence>
<evidence type="ECO:0000269" key="8">
    <source>
    </source>
</evidence>
<evidence type="ECO:0000269" key="9">
    <source>
    </source>
</evidence>
<evidence type="ECO:0000269" key="10">
    <source>
    </source>
</evidence>
<evidence type="ECO:0000269" key="11">
    <source>
    </source>
</evidence>
<evidence type="ECO:0000269" key="12">
    <source>
    </source>
</evidence>
<evidence type="ECO:0000269" key="13">
    <source>
    </source>
</evidence>
<evidence type="ECO:0000269" key="14">
    <source>
    </source>
</evidence>
<evidence type="ECO:0000269" key="15">
    <source>
    </source>
</evidence>
<evidence type="ECO:0000269" key="16">
    <source>
    </source>
</evidence>
<evidence type="ECO:0000269" key="17">
    <source>
    </source>
</evidence>
<evidence type="ECO:0000269" key="18">
    <source>
    </source>
</evidence>
<evidence type="ECO:0000269" key="19">
    <source>
    </source>
</evidence>
<evidence type="ECO:0000269" key="20">
    <source>
    </source>
</evidence>
<evidence type="ECO:0000269" key="21">
    <source>
    </source>
</evidence>
<evidence type="ECO:0000269" key="22">
    <source>
    </source>
</evidence>
<evidence type="ECO:0000269" key="23">
    <source>
    </source>
</evidence>
<evidence type="ECO:0000269" key="24">
    <source>
    </source>
</evidence>
<evidence type="ECO:0000269" key="25">
    <source>
    </source>
</evidence>
<evidence type="ECO:0000269" key="26">
    <source>
    </source>
</evidence>
<evidence type="ECO:0000269" key="27">
    <source>
    </source>
</evidence>
<evidence type="ECO:0000269" key="28">
    <source>
    </source>
</evidence>
<evidence type="ECO:0000269" key="29">
    <source>
    </source>
</evidence>
<evidence type="ECO:0000269" key="30">
    <source>
    </source>
</evidence>
<evidence type="ECO:0000269" key="31">
    <source>
    </source>
</evidence>
<evidence type="ECO:0000269" key="32">
    <source>
    </source>
</evidence>
<evidence type="ECO:0000269" key="33">
    <source>
    </source>
</evidence>
<evidence type="ECO:0000269" key="34">
    <source>
    </source>
</evidence>
<evidence type="ECO:0000269" key="35">
    <source>
    </source>
</evidence>
<evidence type="ECO:0000269" key="36">
    <source>
    </source>
</evidence>
<evidence type="ECO:0000269" key="37">
    <source>
    </source>
</evidence>
<evidence type="ECO:0000269" key="38">
    <source>
    </source>
</evidence>
<evidence type="ECO:0000269" key="39">
    <source>
    </source>
</evidence>
<evidence type="ECO:0000269" key="40">
    <source>
    </source>
</evidence>
<evidence type="ECO:0000269" key="41">
    <source>
    </source>
</evidence>
<evidence type="ECO:0000269" key="42">
    <source>
    </source>
</evidence>
<evidence type="ECO:0000269" key="43">
    <source>
    </source>
</evidence>
<evidence type="ECO:0000269" key="44">
    <source>
    </source>
</evidence>
<evidence type="ECO:0000269" key="45">
    <source>
    </source>
</evidence>
<evidence type="ECO:0000269" key="46">
    <source>
    </source>
</evidence>
<evidence type="ECO:0000269" key="47">
    <source>
    </source>
</evidence>
<evidence type="ECO:0000269" key="48">
    <source>
    </source>
</evidence>
<evidence type="ECO:0000269" key="49">
    <source>
    </source>
</evidence>
<evidence type="ECO:0000269" key="50">
    <source>
    </source>
</evidence>
<evidence type="ECO:0000269" key="51">
    <source>
    </source>
</evidence>
<evidence type="ECO:0000269" key="52">
    <source>
    </source>
</evidence>
<evidence type="ECO:0000269" key="53">
    <source>
    </source>
</evidence>
<evidence type="ECO:0000269" key="54">
    <source>
    </source>
</evidence>
<evidence type="ECO:0000269" key="55">
    <source>
    </source>
</evidence>
<evidence type="ECO:0000269" key="56">
    <source>
    </source>
</evidence>
<evidence type="ECO:0000269" key="57">
    <source>
    </source>
</evidence>
<evidence type="ECO:0000269" key="58">
    <source>
    </source>
</evidence>
<evidence type="ECO:0000269" key="59">
    <source>
    </source>
</evidence>
<evidence type="ECO:0000269" key="60">
    <source>
    </source>
</evidence>
<evidence type="ECO:0000269" key="61">
    <source>
    </source>
</evidence>
<evidence type="ECO:0000269" key="62">
    <source>
    </source>
</evidence>
<evidence type="ECO:0000269" key="63">
    <source>
    </source>
</evidence>
<evidence type="ECO:0000269" key="64">
    <source>
    </source>
</evidence>
<evidence type="ECO:0000269" key="65">
    <source>
    </source>
</evidence>
<evidence type="ECO:0000269" key="66">
    <source>
    </source>
</evidence>
<evidence type="ECO:0000269" key="67">
    <source>
    </source>
</evidence>
<evidence type="ECO:0000269" key="68">
    <source>
    </source>
</evidence>
<evidence type="ECO:0000269" key="69">
    <source>
    </source>
</evidence>
<evidence type="ECO:0000269" key="70">
    <source>
    </source>
</evidence>
<evidence type="ECO:0000269" key="71">
    <source>
    </source>
</evidence>
<evidence type="ECO:0000269" key="72">
    <source>
    </source>
</evidence>
<evidence type="ECO:0000269" key="73">
    <source>
    </source>
</evidence>
<evidence type="ECO:0000269" key="74">
    <source>
    </source>
</evidence>
<evidence type="ECO:0000269" key="75">
    <source>
    </source>
</evidence>
<evidence type="ECO:0000269" key="76">
    <source ref="10"/>
</evidence>
<evidence type="ECO:0000303" key="77">
    <source ref="7"/>
</evidence>
<evidence type="ECO:0000305" key="78"/>
<evidence type="ECO:0000305" key="79">
    <source>
    </source>
</evidence>
<evidence type="ECO:0000305" key="80">
    <source>
    </source>
</evidence>
<evidence type="ECO:0000305" key="81">
    <source>
    </source>
</evidence>
<evidence type="ECO:0000305" key="82">
    <source>
    </source>
</evidence>
<evidence type="ECO:0000305" key="83">
    <source>
    </source>
</evidence>
<evidence type="ECO:0007744" key="84">
    <source>
    </source>
</evidence>
<evidence type="ECO:0007744" key="85">
    <source>
    </source>
</evidence>
<evidence type="ECO:0007829" key="86">
    <source>
        <dbReference type="PDB" id="1D5R"/>
    </source>
</evidence>
<evidence type="ECO:0007829" key="87">
    <source>
        <dbReference type="PDB" id="2KYL"/>
    </source>
</evidence>
<evidence type="ECO:0007829" key="88">
    <source>
        <dbReference type="PDB" id="5BZX"/>
    </source>
</evidence>
<evidence type="ECO:0007829" key="89">
    <source>
        <dbReference type="PDB" id="5BZZ"/>
    </source>
</evidence>
<evidence type="ECO:0007829" key="90">
    <source>
        <dbReference type="PDB" id="7JUL"/>
    </source>
</evidence>
<reference key="1">
    <citation type="journal article" date="1997" name="Cancer Res.">
        <title>TEP1, encoded by a candidate tumor suppressor locus, is a novel protein tyrosine phosphatase regulated by transforming growth factor beta.</title>
        <authorList>
            <person name="Li D.M."/>
            <person name="Sun H."/>
        </authorList>
    </citation>
    <scope>NUCLEOTIDE SEQUENCE [MRNA] (ISOFORM 1)</scope>
    <scope>FUNCTION</scope>
    <scope>CATALYTIC ACTIVITY</scope>
    <scope>SUBCELLULAR LOCATION</scope>
    <scope>INDUCTION</scope>
    <source>
        <tissue>Epithelium</tissue>
    </source>
</reference>
<reference key="2">
    <citation type="journal article" date="1997" name="Nat. Genet.">
        <title>Identification of a candidate tumour suppressor gene, MMAC1, at chromosome 10q23.3 that is mutated in multiple advanced cancers.</title>
        <authorList>
            <person name="Steck P.A."/>
            <person name="Pershouse M.A."/>
            <person name="Jasser S.A."/>
            <person name="Lin H."/>
            <person name="Yung W.K.A."/>
            <person name="Ligon A.H."/>
            <person name="Langford L.A."/>
            <person name="Baumgard M.L."/>
            <person name="Hattier T."/>
            <person name="Davis T."/>
            <person name="Frye C."/>
            <person name="Hu R."/>
            <person name="Swedlund B."/>
            <person name="Teng D.H.-F."/>
            <person name="Tavtigian S.V."/>
        </authorList>
    </citation>
    <scope>NUCLEOTIDE SEQUENCE [MRNA] (ISOFORM 1)</scope>
    <scope>TISSUE SPECIFICITY</scope>
    <scope>VARIANTS GLIOMA SER-15; GLU-36; ARG-42; TRP-57 AND THR-319 DEL</scope>
</reference>
<reference key="3">
    <citation type="journal article" date="1997" name="Science">
        <title>PTEN, a putative protein tyrosine phosphatase gene mutated in human brain, breast, and prostate cancer.</title>
        <authorList>
            <person name="Li J."/>
            <person name="Yen C."/>
            <person name="Liaw D."/>
            <person name="Podsypanina K."/>
            <person name="Bose S."/>
            <person name="Wang S.I."/>
            <person name="Puc J."/>
            <person name="Miliaresis C."/>
            <person name="Rodgers L."/>
            <person name="McCombie R."/>
            <person name="Bigner S.H."/>
            <person name="Giovanella B.C."/>
            <person name="Ittmann M."/>
            <person name="Tycko B."/>
            <person name="Hibshoosh H."/>
            <person name="Wigler M.H."/>
            <person name="Parsons R."/>
        </authorList>
    </citation>
    <scope>NUCLEOTIDE SEQUENCE [MRNA] (ISOFORM 1)</scope>
    <scope>VARIANT GLIOBLASTOMA ARG-129</scope>
    <scope>VARIANT PROSTATE CANCER LEU-134</scope>
</reference>
<reference key="4">
    <citation type="journal article" date="2000" name="Br. J. Cancer">
        <title>The expression profile for the tumour suppressor gene PTEN and associated polymorphic markers.</title>
        <authorList>
            <person name="Hamilton J.A."/>
            <person name="Stewart L.M.D."/>
            <person name="Ajayi L."/>
            <person name="Gray I.C."/>
            <person name="Gray N.E."/>
            <person name="Roberts K.G."/>
            <person name="Watson G.J."/>
            <person name="Kaisary A.V."/>
            <person name="Snary D."/>
        </authorList>
    </citation>
    <scope>NUCLEOTIDE SEQUENCE [GENOMIC DNA]</scope>
</reference>
<reference key="5">
    <citation type="submission" date="1997-04" db="EMBL/GenBank/DDBJ databases">
        <authorList>
            <person name="Wang S."/>
            <person name="Li J."/>
            <person name="Liaw D."/>
            <person name="Bose S."/>
            <person name="Podsypanina K."/>
            <person name="Parsons R."/>
        </authorList>
    </citation>
    <scope>NUCLEOTIDE SEQUENCE [GENOMIC DNA]</scope>
</reference>
<reference key="6">
    <citation type="submission" date="1998-05" db="EMBL/GenBank/DDBJ databases">
        <title>Genomic sequence of PTEN/MMAC1.</title>
        <authorList>
            <person name="Jensen K."/>
            <person name="de la Bastide M."/>
            <person name="Parsons R."/>
            <person name="Parnell L.D."/>
            <person name="Dedhia N."/>
            <person name="Gottesman T."/>
            <person name="Gnoj L."/>
            <person name="Kaplan N."/>
            <person name="Lodhi M."/>
            <person name="Johnson A.F."/>
            <person name="Shohdy N."/>
            <person name="Hasegawa A."/>
            <person name="Haberman K."/>
            <person name="Huang E.N."/>
            <person name="Schutz K."/>
            <person name="Calma C."/>
            <person name="Granat S."/>
            <person name="Wigler M.H."/>
            <person name="McCombie W.R."/>
        </authorList>
    </citation>
    <scope>NUCLEOTIDE SEQUENCE [GENOMIC DNA]</scope>
</reference>
<reference key="7">
    <citation type="submission" date="2011-01" db="EMBL/GenBank/DDBJ databases">
        <title>Homo sapiens phosphatase and tensin homolog mRNA splicing variants.</title>
        <authorList>
            <person name="Yang C.-W."/>
            <person name="Hsu Y.-F."/>
        </authorList>
    </citation>
    <scope>NUCLEOTIDE SEQUENCE [MRNA] (ISOFORM 3)</scope>
</reference>
<reference key="8">
    <citation type="submission" date="2004-05" db="EMBL/GenBank/DDBJ databases">
        <title>Cloning of human full open reading frames in Gateway(TM) system entry vector (pDONR201).</title>
        <authorList>
            <person name="Ebert L."/>
            <person name="Schick M."/>
            <person name="Neubert P."/>
            <person name="Schatten R."/>
            <person name="Henze S."/>
            <person name="Korn B."/>
        </authorList>
    </citation>
    <scope>NUCLEOTIDE SEQUENCE [LARGE SCALE MRNA] (ISOFORM 1)</scope>
</reference>
<reference key="9">
    <citation type="journal article" date="2004" name="Nat. Genet.">
        <title>Complete sequencing and characterization of 21,243 full-length human cDNAs.</title>
        <authorList>
            <person name="Ota T."/>
            <person name="Suzuki Y."/>
            <person name="Nishikawa T."/>
            <person name="Otsuki T."/>
            <person name="Sugiyama T."/>
            <person name="Irie R."/>
            <person name="Wakamatsu A."/>
            <person name="Hayashi K."/>
            <person name="Sato H."/>
            <person name="Nagai K."/>
            <person name="Kimura K."/>
            <person name="Makita H."/>
            <person name="Sekine M."/>
            <person name="Obayashi M."/>
            <person name="Nishi T."/>
            <person name="Shibahara T."/>
            <person name="Tanaka T."/>
            <person name="Ishii S."/>
            <person name="Yamamoto J."/>
            <person name="Saito K."/>
            <person name="Kawai Y."/>
            <person name="Isono Y."/>
            <person name="Nakamura Y."/>
            <person name="Nagahari K."/>
            <person name="Murakami K."/>
            <person name="Yasuda T."/>
            <person name="Iwayanagi T."/>
            <person name="Wagatsuma M."/>
            <person name="Shiratori A."/>
            <person name="Sudo H."/>
            <person name="Hosoiri T."/>
            <person name="Kaku Y."/>
            <person name="Kodaira H."/>
            <person name="Kondo H."/>
            <person name="Sugawara M."/>
            <person name="Takahashi M."/>
            <person name="Kanda K."/>
            <person name="Yokoi T."/>
            <person name="Furuya T."/>
            <person name="Kikkawa E."/>
            <person name="Omura Y."/>
            <person name="Abe K."/>
            <person name="Kamihara K."/>
            <person name="Katsuta N."/>
            <person name="Sato K."/>
            <person name="Tanikawa M."/>
            <person name="Yamazaki M."/>
            <person name="Ninomiya K."/>
            <person name="Ishibashi T."/>
            <person name="Yamashita H."/>
            <person name="Murakawa K."/>
            <person name="Fujimori K."/>
            <person name="Tanai H."/>
            <person name="Kimata M."/>
            <person name="Watanabe M."/>
            <person name="Hiraoka S."/>
            <person name="Chiba Y."/>
            <person name="Ishida S."/>
            <person name="Ono Y."/>
            <person name="Takiguchi S."/>
            <person name="Watanabe S."/>
            <person name="Yosida M."/>
            <person name="Hotuta T."/>
            <person name="Kusano J."/>
            <person name="Kanehori K."/>
            <person name="Takahashi-Fujii A."/>
            <person name="Hara H."/>
            <person name="Tanase T.-O."/>
            <person name="Nomura Y."/>
            <person name="Togiya S."/>
            <person name="Komai F."/>
            <person name="Hara R."/>
            <person name="Takeuchi K."/>
            <person name="Arita M."/>
            <person name="Imose N."/>
            <person name="Musashino K."/>
            <person name="Yuuki H."/>
            <person name="Oshima A."/>
            <person name="Sasaki N."/>
            <person name="Aotsuka S."/>
            <person name="Yoshikawa Y."/>
            <person name="Matsunawa H."/>
            <person name="Ichihara T."/>
            <person name="Shiohata N."/>
            <person name="Sano S."/>
            <person name="Moriya S."/>
            <person name="Momiyama H."/>
            <person name="Satoh N."/>
            <person name="Takami S."/>
            <person name="Terashima Y."/>
            <person name="Suzuki O."/>
            <person name="Nakagawa S."/>
            <person name="Senoh A."/>
            <person name="Mizoguchi H."/>
            <person name="Goto Y."/>
            <person name="Shimizu F."/>
            <person name="Wakebe H."/>
            <person name="Hishigaki H."/>
            <person name="Watanabe T."/>
            <person name="Sugiyama A."/>
            <person name="Takemoto M."/>
            <person name="Kawakami B."/>
            <person name="Yamazaki M."/>
            <person name="Watanabe K."/>
            <person name="Kumagai A."/>
            <person name="Itakura S."/>
            <person name="Fukuzumi Y."/>
            <person name="Fujimori Y."/>
            <person name="Komiyama M."/>
            <person name="Tashiro H."/>
            <person name="Tanigami A."/>
            <person name="Fujiwara T."/>
            <person name="Ono T."/>
            <person name="Yamada K."/>
            <person name="Fujii Y."/>
            <person name="Ozaki K."/>
            <person name="Hirao M."/>
            <person name="Ohmori Y."/>
            <person name="Kawabata A."/>
            <person name="Hikiji T."/>
            <person name="Kobatake N."/>
            <person name="Inagaki H."/>
            <person name="Ikema Y."/>
            <person name="Okamoto S."/>
            <person name="Okitani R."/>
            <person name="Kawakami T."/>
            <person name="Noguchi S."/>
            <person name="Itoh T."/>
            <person name="Shigeta K."/>
            <person name="Senba T."/>
            <person name="Matsumura K."/>
            <person name="Nakajima Y."/>
            <person name="Mizuno T."/>
            <person name="Morinaga M."/>
            <person name="Sasaki M."/>
            <person name="Togashi T."/>
            <person name="Oyama M."/>
            <person name="Hata H."/>
            <person name="Watanabe M."/>
            <person name="Komatsu T."/>
            <person name="Mizushima-Sugano J."/>
            <person name="Satoh T."/>
            <person name="Shirai Y."/>
            <person name="Takahashi Y."/>
            <person name="Nakagawa K."/>
            <person name="Okumura K."/>
            <person name="Nagase T."/>
            <person name="Nomura N."/>
            <person name="Kikuchi H."/>
            <person name="Masuho Y."/>
            <person name="Yamashita R."/>
            <person name="Nakai K."/>
            <person name="Yada T."/>
            <person name="Nakamura Y."/>
            <person name="Ohara O."/>
            <person name="Isogai T."/>
            <person name="Sugano S."/>
        </authorList>
    </citation>
    <scope>NUCLEOTIDE SEQUENCE [LARGE SCALE MRNA] (ISOFORM 1)</scope>
</reference>
<reference key="10">
    <citation type="submission" date="2005-05" db="EMBL/GenBank/DDBJ databases">
        <authorList>
            <consortium name="NIEHS SNPs program"/>
        </authorList>
    </citation>
    <scope>NUCLEOTIDE SEQUENCE [GENOMIC DNA]</scope>
    <scope>VARIANT LEU-290</scope>
</reference>
<reference key="11">
    <citation type="submission" date="2005-09" db="EMBL/GenBank/DDBJ databases">
        <authorList>
            <person name="Mural R.J."/>
            <person name="Istrail S."/>
            <person name="Sutton G.G."/>
            <person name="Florea L."/>
            <person name="Halpern A.L."/>
            <person name="Mobarry C.M."/>
            <person name="Lippert R."/>
            <person name="Walenz B."/>
            <person name="Shatkay H."/>
            <person name="Dew I."/>
            <person name="Miller J.R."/>
            <person name="Flanigan M.J."/>
            <person name="Edwards N.J."/>
            <person name="Bolanos R."/>
            <person name="Fasulo D."/>
            <person name="Halldorsson B.V."/>
            <person name="Hannenhalli S."/>
            <person name="Turner R."/>
            <person name="Yooseph S."/>
            <person name="Lu F."/>
            <person name="Nusskern D.R."/>
            <person name="Shue B.C."/>
            <person name="Zheng X.H."/>
            <person name="Zhong F."/>
            <person name="Delcher A.L."/>
            <person name="Huson D.H."/>
            <person name="Kravitz S.A."/>
            <person name="Mouchard L."/>
            <person name="Reinert K."/>
            <person name="Remington K.A."/>
            <person name="Clark A.G."/>
            <person name="Waterman M.S."/>
            <person name="Eichler E.E."/>
            <person name="Adams M.D."/>
            <person name="Hunkapiller M.W."/>
            <person name="Myers E.W."/>
            <person name="Venter J.C."/>
        </authorList>
    </citation>
    <scope>NUCLEOTIDE SEQUENCE [LARGE SCALE GENOMIC DNA]</scope>
</reference>
<reference key="12">
    <citation type="journal article" date="2004" name="Genome Res.">
        <title>The status, quality, and expansion of the NIH full-length cDNA project: the Mammalian Gene Collection (MGC).</title>
        <authorList>
            <consortium name="The MGC Project Team"/>
        </authorList>
    </citation>
    <scope>NUCLEOTIDE SEQUENCE [LARGE SCALE MRNA] (ISOFORM 1)</scope>
    <source>
        <tissue>Lung</tissue>
    </source>
</reference>
<reference key="13">
    <citation type="journal article" date="1997" name="Proc. Natl. Acad. Sci. U.S.A.">
        <title>P-TEN, the tumor suppressor from human chromosome 10q23, is a dual-specificity phosphatase.</title>
        <authorList>
            <person name="Myers M.P."/>
            <person name="Stolarov J.P."/>
            <person name="Eng C."/>
            <person name="Li J."/>
            <person name="Wang S.I."/>
            <person name="Wigler M.H."/>
            <person name="Parsons R."/>
            <person name="Tonks N.K."/>
        </authorList>
    </citation>
    <scope>FUNCTION</scope>
    <scope>CATALYTIC ACTIVITY</scope>
    <scope>CHARACTERIZATION OF VARIANTS GLIOMA TRP-57; ENDOMETRIAL CANCER TYR-123; GLIOBLASTOMA ARG-129; CWS1 ARG-129; PROSTATE CANCER LEU-134; GLIOBLASTOMA ARG-165; BREAST CANCER PRO-167 AND BZ ARG-170</scope>
</reference>
<reference key="14">
    <citation type="journal article" date="1998" name="J. Biol. Chem.">
        <title>The tumor suppressor, PTEN/MMAC1, dephosphorylates the lipid second messenger, phosphatidylinositol 3,4,5-trisphosphate.</title>
        <authorList>
            <person name="Maehama T."/>
            <person name="Dixon J.E."/>
        </authorList>
    </citation>
    <scope>FUNCTION</scope>
    <scope>CATALYTIC ACTIVITY</scope>
    <scope>CHARACTERIZATION OF VARIANT CWS1 SER-124</scope>
</reference>
<reference key="15">
    <citation type="journal article" date="1998" name="Proc. Natl. Acad. Sci. U.S.A.">
        <title>The lipid phosphatase activity of PTEN is critical for its tumor suppressor function.</title>
        <authorList>
            <person name="Myers M.P."/>
            <person name="Pass I."/>
            <person name="Batty I.H."/>
            <person name="Van der Kaay J."/>
            <person name="Stolarov J.P."/>
            <person name="Hemmings B.A."/>
            <person name="Wigler M.H."/>
            <person name="Downes C.P."/>
            <person name="Tonks N.K."/>
        </authorList>
    </citation>
    <scope>FUNCTION</scope>
    <scope>CATALYTIC ACTIVITY</scope>
    <scope>MUTAGENESIS OF ARG-130</scope>
    <scope>CHARACTERIZATION OF VARIANTS CWS1 SER-124 AND CWS1 GLU-129</scope>
</reference>
<reference key="16">
    <citation type="journal article" date="1998" name="Science">
        <title>Inhibition of cell migration, spreading, and focal adhesions by tumor suppressor PTEN.</title>
        <authorList>
            <person name="Tamura M."/>
            <person name="Gu J."/>
            <person name="Matsumoto K."/>
            <person name="Aota S."/>
            <person name="Parsons R."/>
            <person name="Yamada K.M."/>
        </authorList>
    </citation>
    <scope>FUNCTION</scope>
    <scope>MUTAGENESIS OF ASP-92 AND CYS-124</scope>
    <scope>CHARACTERIZATION OF VARIANT GLU-129</scope>
</reference>
<reference key="17">
    <citation type="journal article" date="1999" name="Proc. Natl. Acad. Sci. U.S.A.">
        <title>The tumor-suppressor activity of PTEN is regulated by its carboxyl-terminal region.</title>
        <authorList>
            <person name="Georgescu M.-M."/>
            <person name="Kirsch K.H."/>
            <person name="Akagi T."/>
            <person name="Shishido T."/>
            <person name="Hanafusa H."/>
        </authorList>
    </citation>
    <scope>FUNCTION</scope>
    <scope>DOMAIN</scope>
    <scope>CHARACTERIZATION OF VARIANTS THR-319 DEL; GLN-345 AND ILE-348</scope>
</reference>
<reference key="18">
    <citation type="journal article" date="2000" name="Cancer Res.">
        <title>Threonine phosphorylation of the MMAC1/PTEN PDZ binding domain both inhibits and stimulates PDZ binding.</title>
        <authorList>
            <person name="Adey N.B."/>
            <person name="Huang L."/>
            <person name="Ormonde P.A."/>
            <person name="Baumgard M.L."/>
            <person name="Pero R."/>
            <person name="Byreddy D.V."/>
            <person name="Tavtigian S.V."/>
            <person name="Bartel P.L."/>
        </authorList>
    </citation>
    <scope>INTERACTION WITH DLG1 AND MAST2</scope>
    <scope>PHOSPHORYLATION AT THR-401</scope>
</reference>
<reference key="19">
    <citation type="journal article" date="2000" name="J. Biol. Chem.">
        <title>Interaction of the tumor suppressor PTEN/MMAC with a PDZ domain of MAGI3, a novel membrane-associated guanylate kinase.</title>
        <authorList>
            <person name="Wu Y."/>
            <person name="Dowbenko D."/>
            <person name="Spencer S."/>
            <person name="Laura R."/>
            <person name="Lee J."/>
            <person name="Gu Q."/>
            <person name="Lasky L.A."/>
        </authorList>
    </citation>
    <scope>INTERACTION WITH MAGI3</scope>
</reference>
<reference key="20">
    <citation type="journal article" date="2000" name="Proc. Natl. Acad. Sci. U.S.A.">
        <title>Evidence for regulation of the PTEN tumor suppressor by a membrane-localized multi-PDZ domain containing scaffold protein MAGI-2.</title>
        <authorList>
            <person name="Wu X."/>
            <person name="Hepner K."/>
            <person name="Castelino-Prabhu S."/>
            <person name="Do D."/>
            <person name="Kaye M.B."/>
            <person name="Yuan X.-J."/>
            <person name="Wood J."/>
            <person name="Ross C."/>
            <person name="Sawyers C.L."/>
            <person name="Whang Y.E."/>
        </authorList>
    </citation>
    <scope>INTERACTION WITH MAGI2</scope>
</reference>
<reference key="21">
    <citation type="journal article" date="2001" name="FEBS Lett.">
        <title>Expanding coincident signaling by PTEN through its inositol 1,3,4,5,6-pentakisphosphate 3-phosphatase activity.</title>
        <authorList>
            <person name="Caffrey J.J."/>
            <person name="Darden T."/>
            <person name="Wenk M.R."/>
            <person name="Shears S.B."/>
        </authorList>
    </citation>
    <scope>FUNCTION</scope>
    <scope>CATALYTIC ACTIVITY</scope>
    <scope>BIOPHYSICOCHEMICAL PROPERTIES</scope>
</reference>
<reference key="22">
    <citation type="journal article" date="2001" name="J. Biol. Chem.">
        <title>The tumor suppressor PTEN is phosphorylated by the protein kinase CK2 at its C terminus. Implications for PTEN stability to proteasome-mediated degradation.</title>
        <authorList>
            <person name="Torres J."/>
            <person name="Pulido R."/>
        </authorList>
    </citation>
    <scope>PHOSPHORYLATION AT SER-370; SER-380; THR-382; THR-383 AND SER-385</scope>
</reference>
<reference key="23">
    <citation type="journal article" date="2001" name="J. Biol. Chem.">
        <title>Phosphorylation of the PTEN tail acts as an inhibitory switch by preventing its recruitment into a protein complex.</title>
        <authorList>
            <person name="Vazquez F."/>
            <person name="Grossman S.R."/>
            <person name="Takahashi Y."/>
            <person name="Rokas M.V."/>
            <person name="Nakamura N."/>
            <person name="Sellers W.R."/>
        </authorList>
    </citation>
    <scope>FUNCTION</scope>
    <scope>PHOSPHORYLATION</scope>
    <scope>INTERACTION WITH MAGI2</scope>
</reference>
<reference key="24">
    <citation type="journal article" date="2002" name="FEBS Lett.">
        <title>Direct identification of PTEN phosphorylation sites.</title>
        <authorList>
            <person name="Miller S."/>
            <person name="Lou D."/>
            <person name="Seldin D."/>
            <person name="Lane W."/>
            <person name="Neel B."/>
        </authorList>
    </citation>
    <scope>PHOSPHORYLATION AT THR-366; SER-370 AND SER-385</scope>
</reference>
<reference key="25">
    <citation type="journal article" date="2004" name="J. Biol. Chem.">
        <title>Regulation of PTEN phosphorylation and stability by a tumor suppressor candidate protein.</title>
        <authorList>
            <person name="Okahara F."/>
            <person name="Ikawa H."/>
            <person name="Kanaho Y."/>
            <person name="Maehama T."/>
        </authorList>
    </citation>
    <scope>INTERACTION WITH NOP53</scope>
    <scope>REGION</scope>
    <scope>CHARACTERIZATION OF VARIANTS CWS1 VAL-341; GLU-343 AND GLN-345</scope>
</reference>
<reference key="26">
    <citation type="journal article" date="2005" name="Hum. Mol. Genet.">
        <title>LKB1 interacts with and phosphorylates PTEN: a functional link between two proteins involved in cancer predisposing syndromes.</title>
        <authorList>
            <person name="Mehenni H."/>
            <person name="Lin-Marq N."/>
            <person name="Buchet-Poyau K."/>
            <person name="Reymond A."/>
            <person name="Collart M.A."/>
            <person name="Picard D."/>
            <person name="Antonarakis S.E."/>
        </authorList>
    </citation>
    <scope>INTERACTION WITH STK11</scope>
    <scope>SUBCELLULAR LOCATION</scope>
    <scope>PHOSPHORYLATION BY STK11</scope>
</reference>
<reference key="27">
    <citation type="journal article" date="2005" name="J. Biol. Chem.">
        <title>Binding of PTEN to specific PDZ domains contributes to PTEN protein stability and phosphorylation by microtubule-associated serine/threonine kinases.</title>
        <authorList>
            <person name="Valiente M."/>
            <person name="Andres-Pons A."/>
            <person name="Gomar B."/>
            <person name="Torres J."/>
            <person name="Gil A."/>
            <person name="Tapparel C."/>
            <person name="Antonarakis S.E."/>
            <person name="Pulido R."/>
        </authorList>
    </citation>
    <scope>INTERACTION WITH MAGI2; MAGI3; MAST1; MAST2 AND MAST3</scope>
    <scope>MUTAGENESIS OF VAL-403</scope>
    <scope>PHOSPHORYLATION</scope>
</reference>
<reference key="28">
    <citation type="journal article" date="2006" name="Cell. Signal.">
        <title>Physiological levels of PTEN control the size of the cellular Ins(1,3,4,5,6)P(5) pool.</title>
        <authorList>
            <person name="Deleu S."/>
            <person name="Choi K."/>
            <person name="Pesesse X."/>
            <person name="Cho J."/>
            <person name="Sulis M.L."/>
            <person name="Parsons R."/>
            <person name="Shears S.B."/>
        </authorList>
    </citation>
    <scope>FUNCTION</scope>
</reference>
<reference key="29">
    <citation type="journal article" date="2006" name="Cell. Signal.">
        <title>The influence of anionic lipids on SHIP2 phosphatidylinositol 3,4,5-trisphosphate 5-phosphatase activity.</title>
        <authorList>
            <person name="Vandeput F."/>
            <person name="Backers K."/>
            <person name="Villeret V."/>
            <person name="Pesesse X."/>
            <person name="Erneux C."/>
        </authorList>
    </citation>
    <scope>CATALYTIC ACTIVITY</scope>
    <scope>ACTIVITY REGULATION</scope>
    <scope>FUNCTION</scope>
</reference>
<reference key="30">
    <citation type="journal article" date="2007" name="Cell">
        <title>NEDD4-1 is a proto-oncogenic ubiquitin ligase for PTEN.</title>
        <authorList>
            <person name="Wang X."/>
            <person name="Trotman L.C."/>
            <person name="Koppie T."/>
            <person name="Alimonti A."/>
            <person name="Chen Z."/>
            <person name="Gao Z."/>
            <person name="Wang J."/>
            <person name="Erdjument-Bromage H."/>
            <person name="Tempst P."/>
            <person name="Cordon-Cardo C."/>
            <person name="Pandolfi P.P."/>
            <person name="Jiang X."/>
        </authorList>
    </citation>
    <scope>INTERACTION WITH NEDD4</scope>
</reference>
<reference key="31">
    <citation type="journal article" date="2008" name="Nature">
        <title>The deubiquitinylation and localization of PTEN are regulated by a HAUSP-PML network.</title>
        <authorList>
            <person name="Song M.S."/>
            <person name="Salmena L."/>
            <person name="Carracedo A."/>
            <person name="Egia A."/>
            <person name="Lo-Coco F."/>
            <person name="Teruya-Feldstein J."/>
            <person name="Pandolfi P.P."/>
        </authorList>
    </citation>
    <scope>FUNCTION</scope>
    <scope>INTERACTION WITH USP7</scope>
    <scope>UBIQUITINATION AT LYS-13 AND LYS-289</scope>
    <scope>DEUBIQUITINATION BY USP7</scope>
    <scope>SUBCELLULAR LOCATION</scope>
    <scope>MUTAGENESIS OF LYS-13 AND LYS-289</scope>
    <scope>CHARACTERIZATION OF VARIANT CWS1 GLU-289</scope>
</reference>
<reference key="32">
    <citation type="journal article" date="2009" name="Cancer Cell">
        <title>Rak functions as a tumor suppressor by regulating PTEN protein stability and function.</title>
        <authorList>
            <person name="Yim E.-K."/>
            <person name="Peng G."/>
            <person name="Dai H."/>
            <person name="Hu R."/>
            <person name="Li K."/>
            <person name="Lu Y."/>
            <person name="Mills G.B."/>
            <person name="Meric-Bernstam F."/>
            <person name="Hennessy B.T."/>
            <person name="Craven R.J."/>
            <person name="Lin S.-Y."/>
        </authorList>
    </citation>
    <scope>INTERACTION WITH FRK</scope>
    <scope>PHOSPHORYLATION AT TYR-336</scope>
    <scope>MUTAGENESIS OF TYR-336</scope>
</reference>
<reference key="33">
    <citation type="journal article" date="2009" name="J. Biol. Chem.">
        <title>X-linked inhibitor of apoptosis protein (XIAP) regulates PTEN ubiquitination, content, and compartmentalization.</title>
        <authorList>
            <person name="Van Themsche C."/>
            <person name="Leblanc V."/>
            <person name="Parent S."/>
            <person name="Asselin E."/>
        </authorList>
    </citation>
    <scope>UBIQUITINATION BY XIAP/BIRC4</scope>
    <scope>SUBCELLULAR LOCATION</scope>
    <scope>INTERACTION WITH XIAP/BIRC4</scope>
</reference>
<reference key="34">
    <citation type="journal article" date="2010" name="J. Biol. Chem.">
        <title>Regulation of PTEN stability and activity by Plk3.</title>
        <authorList>
            <person name="Xu D."/>
            <person name="Yao Y."/>
            <person name="Jiang X."/>
            <person name="Lu L."/>
            <person name="Dai W."/>
        </authorList>
    </citation>
    <scope>PHOSPHORYLATION AT THR-366 AND SER-370</scope>
    <scope>MUTAGENESIS OF THR-366 AND SER-370</scope>
</reference>
<reference key="35">
    <citation type="journal article" date="2010" name="Proc. Natl. Acad. Sci. U.S.A.">
        <title>Regulation of PTEN/Akt and MAP kinase signaling pathways by the ubiquitin ligase activators Ndfip1 and Ndfip2.</title>
        <authorList>
            <person name="Mund T."/>
            <person name="Pelham H.R."/>
        </authorList>
    </citation>
    <scope>INTERACTION WITH NDFIP1 AND NDFIP2</scope>
</reference>
<reference key="36">
    <citation type="journal article" date="2011" name="BMC Syst. Biol.">
        <title>Initial characterization of the human central proteome.</title>
        <authorList>
            <person name="Burkard T.R."/>
            <person name="Planyavsky M."/>
            <person name="Kaupe I."/>
            <person name="Breitwieser F.P."/>
            <person name="Buerckstuemmer T."/>
            <person name="Bennett K.L."/>
            <person name="Superti-Furga G."/>
            <person name="Colinge J."/>
        </authorList>
    </citation>
    <scope>IDENTIFICATION BY MASS SPECTROMETRY [LARGE SCALE ANALYSIS]</scope>
</reference>
<reference key="37">
    <citation type="journal article" date="2012" name="Genes Dev.">
        <title>IGF2BP1 promotes cell migration by regulating MK5 and PTEN signaling.</title>
        <authorList>
            <person name="Stohr N."/>
            <person name="Kohn M."/>
            <person name="Lederer M."/>
            <person name="Glass M."/>
            <person name="Reinke C."/>
            <person name="Singer R.H."/>
            <person name="Huttelmaier S."/>
        </authorList>
    </citation>
    <scope>FUNCTION IN CELL MIGRATION</scope>
</reference>
<reference key="38">
    <citation type="journal article" date="2012" name="Proc. Natl. Acad. Sci. U.S.A.">
        <title>N-terminal acetylome analyses and functional insights of the N-terminal acetyltransferase NatB.</title>
        <authorList>
            <person name="Van Damme P."/>
            <person name="Lasa M."/>
            <person name="Polevoda B."/>
            <person name="Gazquez C."/>
            <person name="Elosegui-Artola A."/>
            <person name="Kim D.S."/>
            <person name="De Juan-Pardo E."/>
            <person name="Demeyer K."/>
            <person name="Hole K."/>
            <person name="Larrea E."/>
            <person name="Timmerman E."/>
            <person name="Prieto J."/>
            <person name="Arnesen T."/>
            <person name="Sherman F."/>
            <person name="Gevaert K."/>
            <person name="Aldabe R."/>
        </authorList>
    </citation>
    <scope>ACETYLATION [LARGE SCALE ANALYSIS] AT THR-2</scope>
    <scope>CLEAVAGE OF INITIATOR METHIONINE [LARGE SCALE ANALYSIS]</scope>
    <scope>IDENTIFICATION BY MASS SPECTROMETRY [LARGE SCALE ANALYSIS]</scope>
</reference>
<reference key="39">
    <citation type="journal article" date="2013" name="Science">
        <title>A secreted PTEN phosphatase that enters cells to alter signaling and survival.</title>
        <authorList>
            <person name="Hopkins B.D."/>
            <person name="Fine B."/>
            <person name="Steinbach N."/>
            <person name="Dendy M."/>
            <person name="Rapp Z."/>
            <person name="Shaw J."/>
            <person name="Pappas K."/>
            <person name="Yu J.S."/>
            <person name="Hodakoski C."/>
            <person name="Mense S."/>
            <person name="Klein J."/>
            <person name="Pegno S."/>
            <person name="Sulis M.L."/>
            <person name="Goldstein H."/>
            <person name="Amendolara B."/>
            <person name="Lei L."/>
            <person name="Maurer M."/>
            <person name="Bruce J."/>
            <person name="Canoll P."/>
            <person name="Hibshoosh H."/>
            <person name="Parsons R."/>
        </authorList>
    </citation>
    <scope>ALTERNATIVE INITIATION (ISOFORM ALPHA)</scope>
    <scope>CTG START CODON</scope>
    <scope>FUNCTION (ISOFORM ALPHA)</scope>
    <scope>SUBCELLULAR LOCATION (ISOFORM ALPHA)</scope>
</reference>
<reference key="40">
    <citation type="journal article" date="2014" name="Am. J. Physiol.">
        <title>TIMAP promotes angiogenesis by suppressing PTEN-mediated Akt inhibition in human glomerular endothelial cells.</title>
        <authorList>
            <person name="Obeidat M."/>
            <person name="Li L."/>
            <person name="Ballermann B.J."/>
        </authorList>
    </citation>
    <scope>INTERACTION WITH PPP1R16B</scope>
</reference>
<reference key="41">
    <citation type="journal article" date="2014" name="Cell Metab.">
        <title>PTENalpha, a PTEN isoform translated through alternative initiation, regulates mitochondrial function and energy metabolism.</title>
        <authorList>
            <person name="Liang H."/>
            <person name="He S."/>
            <person name="Yang J."/>
            <person name="Jia X."/>
            <person name="Wang P."/>
            <person name="Chen X."/>
            <person name="Zhang Z."/>
            <person name="Zou X."/>
            <person name="McNutt M.A."/>
            <person name="Shen W.H."/>
            <person name="Yin Y."/>
        </authorList>
    </citation>
    <scope>ALTERNATIVE INITIATION (ISOFORM ALPHA)</scope>
    <scope>CTG START CODON</scope>
    <scope>SUBCELLULAR LOCATION (ISOFORM ALPHA)</scope>
    <scope>MUTAGENESIS OF MET-1</scope>
</reference>
<reference key="42">
    <citation type="journal article" date="2014" name="J. Proteomics">
        <title>An enzyme assisted RP-RPLC approach for in-depth analysis of human liver phosphoproteome.</title>
        <authorList>
            <person name="Bian Y."/>
            <person name="Song C."/>
            <person name="Cheng K."/>
            <person name="Dong M."/>
            <person name="Wang F."/>
            <person name="Huang J."/>
            <person name="Sun D."/>
            <person name="Wang L."/>
            <person name="Ye M."/>
            <person name="Zou H."/>
        </authorList>
    </citation>
    <scope>PHOSPHORYLATION [LARGE SCALE ANALYSIS] AT THR-366</scope>
    <scope>IDENTIFICATION BY MASS SPECTROMETRY [LARGE SCALE ANALYSIS]</scope>
    <source>
        <tissue>Liver</tissue>
    </source>
</reference>
<reference key="43">
    <citation type="journal article" date="2015" name="J. Mol. Cell Biol.">
        <title>Ndfip1 represses cell proliferation by controlling Pten localization and signaling specificity.</title>
        <authorList>
            <person name="Howitt J."/>
            <person name="Low L.H."/>
            <person name="Putz U."/>
            <person name="Doan A."/>
            <person name="Lackovic J."/>
            <person name="Goh C.P."/>
            <person name="Gunnersen J."/>
            <person name="Silke J."/>
            <person name="Tan S.S."/>
        </authorList>
    </citation>
    <scope>INTERACTION WITH NDFIP1</scope>
    <scope>SUBCELLULAR LOCATION</scope>
</reference>
<reference key="44">
    <citation type="journal article" date="2015" name="Nat. Commun.">
        <title>A phosphorylation switch controls the spatiotemporal activation of Rho GTPases in directional cell migration.</title>
        <authorList>
            <person name="Cao X."/>
            <person name="Kaneko T."/>
            <person name="Li J.S."/>
            <person name="Liu A.D."/>
            <person name="Voss C."/>
            <person name="Li S.S."/>
        </authorList>
    </citation>
    <scope>FUNCTION</scope>
    <scope>INTERACTION WITH TNS3 AND PI3K</scope>
    <scope>PHOSPHORYLATION AT THR-319 AND THR-321</scope>
    <scope>MUTAGENESIS OF SER-229; THR-232; THR-319 AND THR-321</scope>
</reference>
<reference key="45">
    <citation type="journal article" date="2020" name="Cell. Mol. Life Sci.">
        <title>The CRL4-DCAF13 ubiquitin E3 ligase supports oocyte meiotic resumption by targeting PTEN degradation.</title>
        <authorList>
            <person name="Zhang J."/>
            <person name="Zhang Y.L."/>
            <person name="Zhao L.W."/>
            <person name="Pi S.B."/>
            <person name="Zhang S.Y."/>
            <person name="Tong C."/>
            <person name="Fan H.Y."/>
        </authorList>
    </citation>
    <scope>FUNCTION</scope>
    <scope>UBIQUITINATION</scope>
</reference>
<reference key="46">
    <citation type="journal article" date="2023" name="Sci. Signal.">
        <title>The E3 ligase HERC5 promotes antimycobacterial responses in macrophages by ISGylating the phosphatase PTEN.</title>
        <authorList>
            <person name="Du X."/>
            <person name="Sheng J."/>
            <person name="Chen Y."/>
            <person name="He S."/>
            <person name="Yang Y."/>
            <person name="Huang Y."/>
            <person name="Fu Y."/>
            <person name="Lie L."/>
            <person name="Han Z."/>
            <person name="Zhu B."/>
            <person name="Liu H."/>
            <person name="Wen Q."/>
            <person name="Zhou X."/>
            <person name="Zhou C."/>
            <person name="Hu S."/>
            <person name="Ma L."/>
        </authorList>
    </citation>
    <scope>FUNCTION</scope>
    <scope>ISGYLATION</scope>
</reference>
<reference key="47">
    <citation type="journal article" date="1999" name="Cell">
        <title>Crystal structure of the PTEN tumor suppressor: implications for its phosphoinositide phosphatase activity and membrane association.</title>
        <authorList>
            <person name="Lee J.-O."/>
            <person name="Yang H."/>
            <person name="Georgescu M.-M."/>
            <person name="Di Cristofano A."/>
            <person name="Maehama T."/>
            <person name="Shi Y."/>
            <person name="Dixon J.E."/>
            <person name="Pandolfi P."/>
            <person name="Pavletich N.P."/>
        </authorList>
    </citation>
    <scope>X-RAY CRYSTALLOGRAPHY (2.1 ANGSTROMS) OF 8-353 IN COMPLEX WITH L(+)-TARTRATE</scope>
    <scope>SUBUNIT</scope>
    <scope>DOMAIN</scope>
    <scope>MUTAGENESIS OF ASP-92; HIS-93; LYS-125; LYS-128; THR-167; GLN-171; 263-LYS--ALA-269 AND 327-LYS--ALA-335</scope>
    <scope>CATALYTIC ACTIVITY</scope>
</reference>
<reference key="48">
    <citation type="journal article" date="1997" name="Am. J. Hum. Genet.">
        <title>The role of MMAC1 mutations in early-onset breast cancer: causative in association with Cowden syndrome and excluded in BRCA1-negative cases.</title>
        <authorList>
            <person name="Tsou H.C."/>
            <person name="Teng D.H.-F."/>
            <person name="Ping X.L."/>
            <person name="Brancolini V."/>
            <person name="Davis T."/>
            <person name="Hu R."/>
            <person name="Xie X.X."/>
            <person name="Gruener A.C."/>
            <person name="Schrager C.A."/>
            <person name="Christiano A.M."/>
            <person name="Eng C."/>
            <person name="Steck P."/>
            <person name="Ott J."/>
            <person name="Tavtigian S.V."/>
            <person name="Peacocke M."/>
        </authorList>
    </citation>
    <scope>VARIANT CWS1 ASN-137 INS</scope>
</reference>
<reference key="49">
    <citation type="journal article" date="1997" name="Am. J. Hum. Genet.">
        <title>Inherited mutations in PTEN that are associated with breast cancer, Cowden disease, and juvenile polyposis.</title>
        <authorList>
            <person name="Lynch E.D."/>
            <person name="Ostermeyer E.A."/>
            <person name="Lee M.K."/>
            <person name="Arena J.F."/>
            <person name="Ji H."/>
            <person name="Dann J."/>
            <person name="Swisshelm K."/>
            <person name="Suchard D."/>
            <person name="MacLeod P.M."/>
            <person name="Kvinnsland S."/>
            <person name="Gjertsen B.T."/>
            <person name="Heimdal K."/>
            <person name="Lubs H."/>
            <person name="Moeller P."/>
            <person name="King M.-C."/>
        </authorList>
    </citation>
    <scope>VARIANTS CWS1 GLU-343 AND LEU-347</scope>
</reference>
<reference key="50">
    <citation type="journal article" date="1997" name="Cancer Res.">
        <title>Somatic mutations of PTEN in glioblastoma multiforme.</title>
        <authorList>
            <person name="Wang S.I."/>
            <person name="Puc J."/>
            <person name="Li J."/>
            <person name="Bruce J.N."/>
            <person name="Cairns P."/>
            <person name="Sidransky D."/>
            <person name="Parsons R."/>
        </authorList>
    </citation>
    <scope>VARIANTS GLIOBLASTOMA TYR-107; PRO-121; ARG-129; ARG-165 AND GLN-345</scope>
</reference>
<reference key="51">
    <citation type="journal article" date="1997" name="Hum. Mol. Genet.">
        <title>Germline mutations in the PTEN/MMAC1 gene in patients with Cowden disease.</title>
        <authorList>
            <person name="Nelen M.R."/>
            <person name="van Staveren W.C.G."/>
            <person name="Peeters E.A.J."/>
            <person name="Ben-Hassel M."/>
            <person name="Gorlin R.J."/>
            <person name="Hamm H."/>
            <person name="Lindboe C.F."/>
            <person name="Fryns J.-P."/>
            <person name="Sijmons R.H."/>
            <person name="Woods D.G."/>
            <person name="Mariman E.C.M."/>
            <person name="Padberg G.W."/>
            <person name="Kremer H."/>
        </authorList>
    </citation>
    <scope>VARIANTS CWS1 ARG-123 AND ARG-124</scope>
</reference>
<reference key="52">
    <citation type="journal article" date="1997" name="Nat. Genet.">
        <title>Germline mutations of the PTEN gene in Cowden disease, an inherited breast and thyroid cancer syndrome.</title>
        <authorList>
            <person name="Liaw D."/>
            <person name="Marsh D.J."/>
            <person name="Li J."/>
            <person name="Dahia P.L.M."/>
            <person name="Wang S.I."/>
            <person name="Zheng Z."/>
            <person name="Bose S."/>
            <person name="Call K.M."/>
            <person name="Tsou H.C."/>
            <person name="Peacocke M."/>
            <person name="Eng C."/>
            <person name="Parsons R."/>
        </authorList>
    </citation>
    <scope>VARIANT CWS1 GLU-129</scope>
</reference>
<reference key="53">
    <citation type="journal article" date="1997" name="Nat. Genet.">
        <title>Germline mutations in PTEN are present in Bannayan-Zonana syndrome.</title>
        <authorList>
            <person name="Marsh D.J."/>
            <person name="Dahia P.L.M."/>
            <person name="Zheng Z."/>
            <person name="Liaw D."/>
            <person name="Parsons R."/>
            <person name="Gorlin R.J."/>
            <person name="Eng C."/>
        </authorList>
    </citation>
    <scope>VARIANT CWS1 ARG-170</scope>
</reference>
<reference key="54">
    <citation type="journal article" date="1998" name="Cancer Res.">
        <title>Mutation of the PTEN tumor suppressor gene in endometrial hyperplasias.</title>
        <authorList>
            <person name="Maxwell G.L."/>
            <person name="Risinger J.I."/>
            <person name="Gumbs C."/>
            <person name="Shaw H."/>
            <person name="Bentley R.C."/>
            <person name="Barrett J.C."/>
            <person name="Berchuck A."/>
            <person name="Futreal P.A."/>
        </authorList>
    </citation>
    <scope>VARIANTS ENDOMETRIAL HYPERPLASIA ARG-36; LEU-130; CYS-173; ALA-191 AND ILE-348</scope>
</reference>
<reference key="55">
    <citation type="journal article" date="1998" name="Gastroenterology">
        <title>Mutational abrogation of the PTEN/MMAC1 gene in gastrointestinal polyps in patients with Cowden disease.</title>
        <authorList>
            <person name="Chi S.-G."/>
            <person name="Kim H.-J."/>
            <person name="Park B.-J."/>
            <person name="Min H.-J."/>
            <person name="Park J.-H."/>
            <person name="Kim Y.-W."/>
            <person name="Dong S.-H."/>
            <person name="Kim B.-H."/>
            <person name="Lee J.-I."/>
            <person name="Chang Y.-W."/>
            <person name="Chang R."/>
            <person name="Kim W.-K."/>
            <person name="Yang M.-H."/>
        </authorList>
    </citation>
    <scope>VARIANT CWS1 GLU-289</scope>
</reference>
<reference key="56">
    <citation type="journal article" date="1998" name="Hum. Genet.">
        <title>The genetic basis of Cowden's syndrome: three novel mutations in PTEN/MMAC1/TEP1.</title>
        <authorList>
            <person name="Tsou H.C."/>
            <person name="Ping X.L."/>
            <person name="Xie X.X."/>
            <person name="Gruener A.C."/>
            <person name="Zhang H."/>
            <person name="Nini R."/>
            <person name="Swisshelm K."/>
            <person name="Sybert V."/>
            <person name="Diamond T.M."/>
            <person name="Sutphen R."/>
            <person name="Peacocke M."/>
        </authorList>
    </citation>
    <scope>VARIANTS CWS1 HIS-68 AND PRO-112</scope>
</reference>
<reference key="57">
    <citation type="journal article" date="1998" name="Hum. Mol. Genet.">
        <title>Mutation spectrum and genotype-phenotype analyses in Cowden disease and Bannayan-Zonana syndrome, two hamartoma syndromes with germline PTEN mutation.</title>
        <authorList>
            <person name="Marsh D.J."/>
            <person name="Coulon V."/>
            <person name="Lunetta K.L."/>
            <person name="Rocca-Serra P."/>
            <person name="Dahia P.L.M."/>
            <person name="Zheng Z."/>
            <person name="Liaw D."/>
            <person name="Caron S."/>
            <person name="Duboue B."/>
            <person name="Lin A.Y."/>
            <person name="Richardson A.-L."/>
            <person name="Bonnetblanc J.-M."/>
            <person name="Bressieux J.-M."/>
            <person name="Cabarrot-Moreau A."/>
            <person name="Chompret A."/>
            <person name="Demange L."/>
            <person name="Eeles R.A."/>
            <person name="Yahanda A.M."/>
            <person name="Fearon E.R."/>
            <person name="Fricker J.-P."/>
            <person name="Gorlin R.J."/>
            <person name="Hodgson S.V."/>
            <person name="Huson S."/>
            <person name="Lacombe D."/>
            <person name="Leprat F."/>
            <person name="Odent S."/>
            <person name="Toulouse C."/>
            <person name="Olopade O.I."/>
            <person name="Sobol H."/>
            <person name="Tishler S."/>
            <person name="Woods C.G."/>
            <person name="Robinson B.G."/>
            <person name="Weber H.C."/>
            <person name="Parsons R."/>
            <person name="Peacocke M."/>
            <person name="Longy M."/>
            <person name="Eng C."/>
        </authorList>
    </citation>
    <scope>VARIANTS CWS1 ARG-67 AND VAL-165</scope>
</reference>
<reference key="58">
    <citation type="journal article" date="1998" name="Int. J. Oncol.">
        <title>Novel mutation of the PTEN gene in an Italian Cowden's disease kindred.</title>
        <authorList>
            <person name="Scala S."/>
            <person name="Bruni P."/>
            <person name="Lo Muzio L."/>
            <person name="Mignogna M."/>
            <person name="Viglietto G."/>
            <person name="Fusco A."/>
        </authorList>
    </citation>
    <scope>VARIANT CWS1 TYR-136</scope>
</reference>
<reference key="59">
    <citation type="journal article" date="1998" name="J. Med. Genet.">
        <title>Germline PTEN mutations in Cowden syndrome-like families.</title>
        <authorList>
            <person name="Marsh D.J."/>
            <person name="Dahia P.L.M."/>
            <person name="Caron S."/>
            <person name="Kum J.B."/>
            <person name="Frayling I.M."/>
            <person name="Tomlinson I.P.M."/>
            <person name="Hughes K.S."/>
            <person name="Eeles R.A."/>
            <person name="Hodgson S.V."/>
            <person name="Murday V.A."/>
            <person name="Houlston R."/>
            <person name="Eng C."/>
        </authorList>
    </citation>
    <scope>VARIANT CWS1 PRO-70</scope>
</reference>
<reference key="60">
    <citation type="journal article" date="1998" name="Nat. Genet.">
        <title>PTEN germ-line mutations in juvenile polyposis coli.</title>
        <authorList>
            <person name="Olschwang S."/>
            <person name="Serova-Sinilnikova O.M."/>
            <person name="Lenoir G.M."/>
            <person name="Thomas G."/>
        </authorList>
    </citation>
    <scope>VARIANT CWS1 ARG-35</scope>
</reference>
<reference key="61">
    <citation type="journal article" date="1999" name="Am. J. Hum. Genet.">
        <title>Variant manifestation of Cowden disease in Japan: hamartomatous polyposis of the digestive tract with mutation of the PTEN gene.</title>
        <authorList>
            <person name="Kurose K."/>
            <person name="Araki T."/>
            <person name="Matsunaka T."/>
            <person name="Takada Y."/>
            <person name="Emi M."/>
        </authorList>
    </citation>
    <scope>VARIANT CWS1 GLN-130</scope>
</reference>
<reference key="62">
    <citation type="journal article" date="1999" name="Am. J. Med. Genet.">
        <title>Severe Lhermitte-Duclos disease with unique germline mutation of PTEN.</title>
        <authorList>
            <person name="Sutphen R."/>
            <person name="Diamond T.M."/>
            <person name="Minton S.E."/>
            <person name="Peacocke M."/>
            <person name="Tsou H.C."/>
            <person name="Root A.W."/>
        </authorList>
    </citation>
    <scope>VARIANT CWS1/LDD PRO-112</scope>
</reference>
<reference key="63">
    <citation type="journal article" date="1999" name="Eur. J. Hum. Genet.">
        <title>Novel PTEN mutations in patients with Cowden disease: absence of clear genotype-phenotype correlations.</title>
        <authorList>
            <person name="Nelen M.R."/>
            <person name="Kremer H."/>
            <person name="Konings I.B.M."/>
            <person name="Schoute F."/>
            <person name="van Essen A.J."/>
            <person name="Koch R."/>
            <person name="Woods C.G."/>
            <person name="Fryns J.-P."/>
            <person name="Hamel B.C.J."/>
            <person name="Hoefsloot L.H."/>
            <person name="Peeters E.A.J."/>
            <person name="Padberg G.W."/>
        </authorList>
    </citation>
    <scope>VARIANTS CWS1 ILE-33 DEL; ARG-123; ARG-124 AND GLU-165</scope>
</reference>
<reference key="64">
    <citation type="journal article" date="1999" name="Hum. Mol. Genet.">
        <title>PTEN mutation spectrum and genotype-phenotype correlations in Bannayan-Riley-Ruvalcaba syndrome suggest a single entity with Cowden syndrome.</title>
        <authorList>
            <person name="Marsh D.J."/>
            <person name="Kum J.B."/>
            <person name="Lunetta K.L."/>
            <person name="Bennett M.J."/>
            <person name="Gorlin R.J."/>
            <person name="Ahmed S.F."/>
            <person name="Bodurtha J."/>
            <person name="Crowe C."/>
            <person name="Curtis M.A."/>
            <person name="Dasouki M."/>
            <person name="Dunn T."/>
            <person name="Feit H."/>
            <person name="Geraghty M.T."/>
            <person name="Graham J.M. Jr."/>
            <person name="Hodgson S.V."/>
            <person name="Hunter A."/>
            <person name="Korf B.R."/>
            <person name="Manchester D."/>
            <person name="Miesfeldt S."/>
            <person name="Murday V.A."/>
            <person name="Nathanson K.L."/>
            <person name="Parisi M."/>
            <person name="Pober B."/>
            <person name="Romano C."/>
            <person name="Tolmie J.L."/>
            <person name="Trembath R."/>
            <person name="Winter R.M."/>
            <person name="Zackai E.H."/>
            <person name="Zori R.T."/>
            <person name="Weng L.-P."/>
            <person name="Dahia P.L.M."/>
            <person name="Eng C."/>
        </authorList>
    </citation>
    <scope>VARIANTS CWS1 ASP-34; HIS-68; TYR-105; VAL-135; ARG-170 AND LEU-246</scope>
</reference>
<reference key="65">
    <citation type="journal article" date="2000" name="Cancer Res.">
        <title>Functional evaluation of PTEN missense mutations using in vitro phosphoinositide phosphatase assay.</title>
        <authorList>
            <person name="Han S.-Y."/>
            <person name="Kato H."/>
            <person name="Kato S."/>
            <person name="Suzuki T."/>
            <person name="Shibata H."/>
            <person name="Ishii S."/>
            <person name="Shiiba K."/>
            <person name="Matsuno S."/>
            <person name="Kanamaru R."/>
            <person name="Ishioka C."/>
        </authorList>
    </citation>
    <scope>CHARACTERIZATION OF VARIANTS ASN-10; CYS-16; GLU-20; SER-27; ARG-61; HIS-68; ARG-112; PRO-121; ARG-129; GLY-130; ILE-133; LEU-134; ARG-165; ASN-170; CYS-173; HIS-173; PRO-173; ASN-174; PHE-227; CYS-251; GLN-345; GLY-369 AND ILE-401</scope>
    <scope>CHARACTERIZATION OF VARIANTS CWS1 TYR-71; TYR-93; PHE-105; TYR-107; PRO-112; ARG-124; GLU-129; LEU-130; GLN-130; TYR-136; CYS-155; ARG-170; GLU-289; GLY-331; VAL-341; ASN-342; GLU-343 AND LEU-347</scope>
</reference>
<reference key="66">
    <citation type="journal article" date="2000" name="Exp. Dermatol.">
        <title>Germline PTEN mutations in three families with Cowden syndrome.</title>
        <authorList>
            <person name="Celebi J.T."/>
            <person name="Ping X.L."/>
            <person name="Zhang H."/>
            <person name="Remington T."/>
            <person name="Sulica V.I."/>
            <person name="Tsou H.C."/>
            <person name="Peacocke M."/>
        </authorList>
    </citation>
    <scope>VARIANT CWS1 ARG-36</scope>
</reference>
<reference key="67">
    <citation type="journal article" date="2000" name="J. Med. Genet.">
        <title>Novel germline mutations in the PTEN tumour suppressor gene found in women with multiple cancers.</title>
        <authorList>
            <person name="De Vivo I."/>
            <person name="Gertig D.M."/>
            <person name="Nagase S."/>
            <person name="Hankinson S.E."/>
            <person name="O'Brien R."/>
            <person name="Speizer F.E."/>
            <person name="Parsons R."/>
            <person name="Hunter D.J."/>
        </authorList>
    </citation>
    <scope>VARIANTS MULTIPLE CANCERS LEU-119 AND LEU-158</scope>
</reference>
<reference key="68">
    <citation type="journal article" date="2000" name="J. Med. Genet.">
        <title>Identification of PTEN mutations in metastatic melanoma specimens.</title>
        <authorList>
            <person name="Celebi J.T."/>
            <person name="Shendrik I."/>
            <person name="Silvers D.N."/>
            <person name="Peacocke M."/>
        </authorList>
    </citation>
    <scope>VARIANTS MALIGNANT MELANOMA ASN-19 AND ILE-217</scope>
</reference>
<reference key="69">
    <citation type="journal article" date="2001" name="Hum. Mol. Genet.">
        <title>PTEN coordinates G1 arrest by down-regulating cyclin D1 via its protein phosphatase activity and up-regulating p27 via its lipid phosphatase activity in a breast cancer model.</title>
        <authorList>
            <person name="Weng L.-P."/>
            <person name="Brown J.L."/>
            <person name="Eng C."/>
        </authorList>
    </citation>
    <scope>CHARACTERIZATION OF VARIANTS CWS1 SER-124 AND GLU-129</scope>
</reference>
<reference key="70">
    <citation type="journal article" date="2001" name="J. Med. Genet.">
        <title>A novel germline mutation of the PTEN gene in a patient with macrocephaly, ventricular dilatation, and features of VATER association.</title>
        <authorList>
            <person name="Reardon W."/>
            <person name="Zhou X.-P."/>
            <person name="Eng C."/>
        </authorList>
    </citation>
    <scope>VARIANT ASP-61</scope>
</reference>
<reference key="71">
    <citation type="journal article" date="2001" name="Neoplasia">
        <title>Rapid mutation scanning of genes associated with familial cancer syndromes using denaturing high-performance liquid chromatography.</title>
        <authorList>
            <person name="Marsh D.J."/>
            <person name="Theodosopoulos G."/>
            <person name="Howell V."/>
            <person name="Richardson A.-L."/>
            <person name="Benn D.E."/>
            <person name="Proos A.L."/>
            <person name="Eng C."/>
            <person name="Robinson B.G."/>
        </authorList>
    </citation>
    <scope>VARIANTS CWS1 ASP-34; GLY-47; HIS-68; TYR-105; VAL-135 AND ARG-170</scope>
</reference>
<reference key="72">
    <citation type="journal article" date="2002" name="Br. J. Cancer">
        <title>A novel germline mutation of PTEN associated with brain tumours of multiple lineages.</title>
        <authorList>
            <person name="Staal F.J.T."/>
            <person name="van der Luijt R.B."/>
            <person name="Baert M.R.M."/>
            <person name="van Drunen J."/>
            <person name="van Bakel H."/>
            <person name="Peters E."/>
            <person name="de Valk I."/>
            <person name="van Amstel H.K.P."/>
            <person name="Taphoorn M.J.B."/>
            <person name="Jansen G.H."/>
            <person name="van Veelen C.W.M."/>
            <person name="Burgering B."/>
            <person name="Staal G.E.J."/>
        </authorList>
    </citation>
    <scope>VARIANT GLM2 GLN-234</scope>
    <scope>CHARACTERIZATION OF VARIANT GLM2 GLN-234</scope>
</reference>
<reference key="73">
    <citation type="journal article" date="2002" name="Cancer Genet. Cytogenet.">
        <title>Detection of new PTEN/MMAC1 mutations in head and neck squamous cell carcinomas with loss of chromosome 10.</title>
        <authorList>
            <person name="Poetsch M."/>
            <person name="Lorenz G."/>
            <person name="Kleist B."/>
        </authorList>
    </citation>
    <scope>VARIANT HNSCC GLY-121</scope>
</reference>
<reference key="74">
    <citation type="journal article" date="2002" name="J. Med. Genet.">
        <title>Germline mutation of the tumour suppressor PTEN in Proteus syndrome.</title>
        <authorList>
            <person name="Smith J.M."/>
            <person name="Kirk E.P.E."/>
            <person name="Theodosopoulos G."/>
            <person name="Marshall G.M."/>
            <person name="Walker J."/>
            <person name="Rogers M."/>
            <person name="Field M."/>
            <person name="Brereton J.J."/>
            <person name="Marsh D.J."/>
        </authorList>
    </citation>
    <scope>DISCUSSION OF PTEN INVOLVEMENT IN PROTEUS SYNDROME</scope>
</reference>
<reference key="75">
    <citation type="journal article" date="2005" name="J. Med. Genet.">
        <title>Subset of individuals with autism spectrum disorders and extreme macrocephaly associated with germline PTEN tumour suppressor gene mutations.</title>
        <authorList>
            <person name="Butler M.G."/>
            <person name="Dasouki M.J."/>
            <person name="Zhou X.-P."/>
            <person name="Talebizadeh Z."/>
            <person name="Brown M."/>
            <person name="Takahashi T.N."/>
            <person name="Miles J.H."/>
            <person name="Wang C.H."/>
            <person name="Stratton R."/>
            <person name="Pilarski R."/>
            <person name="Eng C."/>
        </authorList>
    </citation>
    <scope>VARIANTS MCEPHAS ARG-93; SER-241 AND GLY-252</scope>
</reference>
<reference key="76">
    <citation type="journal article" date="2006" name="Int. J. Cancer">
        <title>The relationship between microsatellite instability and PTEN gene mutations in endometrial cancer.</title>
        <authorList>
            <person name="Bilbao C."/>
            <person name="Rodriguez G."/>
            <person name="Ramirez R."/>
            <person name="Falcon O."/>
            <person name="Leon L."/>
            <person name="Chirino R."/>
            <person name="Rivero J.F."/>
            <person name="Falcon O. Jr."/>
            <person name="Diaz-Chico B.N."/>
            <person name="Diaz-Chico J.C."/>
            <person name="Perucho M."/>
        </authorList>
    </citation>
    <scope>VARIANT ENDMC GLU-36</scope>
</reference>
<reference key="77">
    <citation type="journal article" date="2007" name="Am. J. Hum. Genet.">
        <title>Recurrent 10q22-q23 deletions: a genomic disorder on 10q associated with cognitive and behavioral abnormalities.</title>
        <authorList>
            <person name="Balciuniene J."/>
            <person name="Feng N."/>
            <person name="Iyadurai K."/>
            <person name="Hirsch B."/>
            <person name="Charnas L."/>
            <person name="Bill B.R."/>
            <person name="Easterday M.C."/>
            <person name="Staaf J."/>
            <person name="Oseth L."/>
            <person name="Czapansky-Beilman D."/>
            <person name="Avramopoulos D."/>
            <person name="Thomas G.H."/>
            <person name="Borg A."/>
            <person name="Valle D."/>
            <person name="Schimmenti L.A."/>
            <person name="Selleck S.B."/>
        </authorList>
    </citation>
    <scope>INVOLVEMENT IN CHROMOSOME 10Q23 DELETION SYNDROME</scope>
</reference>
<reference key="78">
    <citation type="journal article" date="2006" name="Am. J. Med. Genet. A">
        <title>A germline PTEN mutation with manifestations of prenatal onset and verrucous epidermal nevus.</title>
        <authorList>
            <person name="Tekin M."/>
            <person name="Hismi B.O."/>
            <person name="Fitoz S."/>
            <person name="Yalcinkaya F."/>
            <person name="Ekim M."/>
            <person name="Kansu A."/>
            <person name="Ertem M."/>
            <person name="Deda G."/>
            <person name="Tutar E."/>
            <person name="Arsan S."/>
            <person name="Zhou X.-P."/>
            <person name="Pilarski R."/>
            <person name="Eng C."/>
            <person name="Akar N."/>
        </authorList>
    </citation>
    <scope>VARIANT VAL-132</scope>
</reference>
<reference key="79">
    <citation type="journal article" date="2011" name="J. Med. Genet.">
        <title>Predicting PTEN mutations: an evaluation of Cowden syndrome and Bannayan-Riley-Ruvalcaba syndrome clinical features.</title>
        <authorList>
            <person name="Pilarski R."/>
            <person name="Stephens J.A."/>
            <person name="Noss R."/>
            <person name="Fisher J.L."/>
            <person name="Prior T.W."/>
        </authorList>
    </citation>
    <scope>VARIANTS CWS1 SER-15; ASP-34; ARG-36; ARG-61; HIS-68; GLU-129; GLY-130; LEU-130; GLN-130; TYR-136; ARG-165; ARG-170; GLY-252 AND LEU-347</scope>
</reference>
<reference key="80">
    <citation type="journal article" date="2012" name="Science">
        <title>Multiplex targeted sequencing identifies recurrently mutated genes in autism spectrum disorders.</title>
        <authorList>
            <person name="O'Roak B.J."/>
            <person name="Vives L."/>
            <person name="Fu W."/>
            <person name="Egertson J.D."/>
            <person name="Stanaway I.B."/>
            <person name="Phelps I.G."/>
            <person name="Carvill G."/>
            <person name="Kumar A."/>
            <person name="Lee C."/>
            <person name="Ankenman K."/>
            <person name="Munson J."/>
            <person name="Hiatt J.B."/>
            <person name="Turner E.H."/>
            <person name="Levy R."/>
            <person name="O'Day D.R."/>
            <person name="Krumm N."/>
            <person name="Coe B.P."/>
            <person name="Martin B.K."/>
            <person name="Borenstein E."/>
            <person name="Nickerson D.A."/>
            <person name="Mefford H.C."/>
            <person name="Doherty D."/>
            <person name="Akey J.M."/>
            <person name="Bernier R."/>
            <person name="Eichler E.E."/>
            <person name="Shendure J."/>
        </authorList>
    </citation>
    <scope>VARIANTS MCEPHAS ILE-131 AND ASN-167</scope>
</reference>
<reference key="81">
    <citation type="journal article" date="2014" name="J. Clin. Oncol.">
        <title>Second malignant neoplasms in patients with Cowden syndrome with underlying germline PTEN mutations.</title>
        <authorList>
            <person name="Ngeow J."/>
            <person name="Stanuch K."/>
            <person name="Mester J.L."/>
            <person name="Barnholtz-Sloan J.S."/>
            <person name="Eng C."/>
        </authorList>
    </citation>
    <scope>VARIANTS CWS1 ARG-61; TYR-93; GLY-130; GLN-130; LEU-130 AND CYS-173</scope>
</reference>
<reference key="82">
    <citation type="journal article" date="2015" name="Neuron">
        <title>Targeted DNA Sequencing from Autism Spectrum Disorder Brains Implicates Multiple Genetic Mechanisms.</title>
        <authorList>
            <person name="D'Gama A.M."/>
            <person name="Pochareddy S."/>
            <person name="Li M."/>
            <person name="Jamuar S.S."/>
            <person name="Reiff R.E."/>
            <person name="Lam A.T."/>
            <person name="Sestan N."/>
            <person name="Walsh C.A."/>
        </authorList>
    </citation>
    <scope>VARIANT MCEPHAS 65-TYR--VAL-403 DEL</scope>
</reference>
<reference key="83">
    <citation type="journal article" date="2015" name="Proc. Natl. Acad. Sci. U.S.A.">
        <title>Discovery and functional characterization of a neomorphic PTEN mutation.</title>
        <authorList>
            <person name="Costa H.A."/>
            <person name="Leitner M.G."/>
            <person name="Sos M.L."/>
            <person name="Mavrantoni A."/>
            <person name="Rychkova A."/>
            <person name="Johnson J.R."/>
            <person name="Newton B.W."/>
            <person name="Yee M.C."/>
            <person name="De La Vega F.M."/>
            <person name="Ford J.M."/>
            <person name="Krogan N.J."/>
            <person name="Shokat K.M."/>
            <person name="Oliver D."/>
            <person name="Halaszovich C.R."/>
            <person name="Bustamante C.D."/>
        </authorList>
    </citation>
    <scope>VARIANT PROSTATE CANCER GLY-126</scope>
    <scope>CHARACTERIZATION OF VARIANT GLY-126</scope>
    <scope>MUTAGENESIS OF ALA-126</scope>
    <scope>FUNCTION</scope>
</reference>
<reference key="84">
    <citation type="journal article" date="2024" name="Cancer Res.">
        <title>The genomic landscape of benign and malignant thyroid tumors from individuals carrying germline PTEN variants is distinct from sporadic thyroid cancers.</title>
        <authorList>
            <person name="Plitt G."/>
            <person name="Brewer T."/>
            <person name="Yehia L."/>
            <person name="Rabinowitz L."/>
            <person name="Griffith C.C."/>
            <person name="Eng C."/>
        </authorList>
    </citation>
    <scope>VARIANT ASN-174</scope>
</reference>
<dbReference type="EC" id="3.1.3.16" evidence="60"/>
<dbReference type="EC" id="3.1.3.48" evidence="58 60"/>
<dbReference type="EC" id="3.1.3.67" evidence="34 73"/>
<dbReference type="EC" id="3.1.3.-" evidence="79 82"/>
<dbReference type="EMBL" id="U96180">
    <property type="protein sequence ID" value="AAB66902.1"/>
    <property type="molecule type" value="mRNA"/>
</dbReference>
<dbReference type="EMBL" id="U92436">
    <property type="protein sequence ID" value="AAC51182.1"/>
    <property type="molecule type" value="mRNA"/>
</dbReference>
<dbReference type="EMBL" id="U93051">
    <property type="protein sequence ID" value="AAC51183.1"/>
    <property type="molecule type" value="mRNA"/>
</dbReference>
<dbReference type="EMBL" id="AF143315">
    <property type="protein sequence ID" value="AAD38372.1"/>
    <property type="molecule type" value="Genomic_DNA"/>
</dbReference>
<dbReference type="EMBL" id="AF143312">
    <property type="protein sequence ID" value="AAD38372.1"/>
    <property type="status" value="JOINED"/>
    <property type="molecule type" value="Genomic_DNA"/>
</dbReference>
<dbReference type="EMBL" id="AF143313">
    <property type="protein sequence ID" value="AAD38372.1"/>
    <property type="status" value="JOINED"/>
    <property type="molecule type" value="Genomic_DNA"/>
</dbReference>
<dbReference type="EMBL" id="AF143314">
    <property type="protein sequence ID" value="AAD38372.1"/>
    <property type="status" value="JOINED"/>
    <property type="molecule type" value="Genomic_DNA"/>
</dbReference>
<dbReference type="EMBL" id="AF000734">
    <property type="protein sequence ID" value="AAC08699.1"/>
    <property type="molecule type" value="Genomic_DNA"/>
</dbReference>
<dbReference type="EMBL" id="AF000726">
    <property type="protein sequence ID" value="AAC08699.1"/>
    <property type="status" value="JOINED"/>
    <property type="molecule type" value="Genomic_DNA"/>
</dbReference>
<dbReference type="EMBL" id="AF000727">
    <property type="protein sequence ID" value="AAC08699.1"/>
    <property type="status" value="JOINED"/>
    <property type="molecule type" value="Genomic_DNA"/>
</dbReference>
<dbReference type="EMBL" id="AF000728">
    <property type="protein sequence ID" value="AAC08699.1"/>
    <property type="status" value="JOINED"/>
    <property type="molecule type" value="Genomic_DNA"/>
</dbReference>
<dbReference type="EMBL" id="AF000729">
    <property type="protein sequence ID" value="AAC08699.1"/>
    <property type="status" value="JOINED"/>
    <property type="molecule type" value="Genomic_DNA"/>
</dbReference>
<dbReference type="EMBL" id="AF000730">
    <property type="protein sequence ID" value="AAC08699.1"/>
    <property type="status" value="JOINED"/>
    <property type="molecule type" value="Genomic_DNA"/>
</dbReference>
<dbReference type="EMBL" id="AF000731">
    <property type="protein sequence ID" value="AAC08699.1"/>
    <property type="status" value="JOINED"/>
    <property type="molecule type" value="Genomic_DNA"/>
</dbReference>
<dbReference type="EMBL" id="AF000732">
    <property type="protein sequence ID" value="AAC08699.1"/>
    <property type="status" value="JOINED"/>
    <property type="molecule type" value="Genomic_DNA"/>
</dbReference>
<dbReference type="EMBL" id="AF000733">
    <property type="protein sequence ID" value="AAC08699.1"/>
    <property type="status" value="JOINED"/>
    <property type="molecule type" value="Genomic_DNA"/>
</dbReference>
<dbReference type="EMBL" id="AF067844">
    <property type="protein sequence ID" value="AAD13528.1"/>
    <property type="molecule type" value="Genomic_DNA"/>
</dbReference>
<dbReference type="EMBL" id="JF268690">
    <property type="protein sequence ID" value="ADZ48535.1"/>
    <property type="molecule type" value="mRNA"/>
</dbReference>
<dbReference type="EMBL" id="CR450306">
    <property type="protein sequence ID" value="CAG29302.1"/>
    <property type="molecule type" value="mRNA"/>
</dbReference>
<dbReference type="EMBL" id="AK313581">
    <property type="protein sequence ID" value="BAG36351.1"/>
    <property type="molecule type" value="mRNA"/>
</dbReference>
<dbReference type="EMBL" id="DQ073384">
    <property type="protein sequence ID" value="AAY57327.1"/>
    <property type="molecule type" value="Genomic_DNA"/>
</dbReference>
<dbReference type="EMBL" id="CH471066">
    <property type="protein sequence ID" value="EAW50174.1"/>
    <property type="molecule type" value="Genomic_DNA"/>
</dbReference>
<dbReference type="EMBL" id="BC005821">
    <property type="protein sequence ID" value="AAH05821.1"/>
    <property type="molecule type" value="mRNA"/>
</dbReference>
<dbReference type="CCDS" id="CCDS31238.1">
    <molecule id="P60484-1"/>
</dbReference>
<dbReference type="RefSeq" id="NP_000305.3">
    <molecule id="P60484-1"/>
    <property type="nucleotide sequence ID" value="NM_000314.6"/>
</dbReference>
<dbReference type="RefSeq" id="NP_001291646.2">
    <property type="nucleotide sequence ID" value="NM_001304717.2"/>
</dbReference>
<dbReference type="RefSeq" id="NP_001291647.1">
    <property type="nucleotide sequence ID" value="NM_001304718.1"/>
</dbReference>
<dbReference type="PDB" id="1D5R">
    <property type="method" value="X-ray"/>
    <property type="resolution" value="2.10 A"/>
    <property type="chains" value="A=8-353"/>
</dbReference>
<dbReference type="PDB" id="2KYL">
    <property type="method" value="NMR"/>
    <property type="chains" value="B=391-403"/>
</dbReference>
<dbReference type="PDB" id="4O1V">
    <property type="method" value="X-ray"/>
    <property type="resolution" value="2.00 A"/>
    <property type="chains" value="B=354-368"/>
</dbReference>
<dbReference type="PDB" id="5BUG">
    <property type="method" value="X-ray"/>
    <property type="resolution" value="2.40 A"/>
    <property type="chains" value="A/B/C/D=14-351"/>
</dbReference>
<dbReference type="PDB" id="5BZX">
    <property type="method" value="X-ray"/>
    <property type="resolution" value="2.50 A"/>
    <property type="chains" value="A/B/C/D=14-351"/>
</dbReference>
<dbReference type="PDB" id="5BZZ">
    <property type="method" value="X-ray"/>
    <property type="resolution" value="2.20 A"/>
    <property type="chains" value="A/B/C/D=14-351"/>
</dbReference>
<dbReference type="PDB" id="7JTX">
    <property type="method" value="X-ray"/>
    <property type="resolution" value="3.23 A"/>
    <property type="chains" value="A=7-395"/>
</dbReference>
<dbReference type="PDB" id="7JUK">
    <property type="method" value="X-ray"/>
    <property type="resolution" value="3.15 A"/>
    <property type="chains" value="A=7-353, A=378-390"/>
</dbReference>
<dbReference type="PDB" id="7JUL">
    <property type="method" value="X-ray"/>
    <property type="resolution" value="2.53 A"/>
    <property type="chains" value="A=7-353, A=378-390"/>
</dbReference>
<dbReference type="PDB" id="7JVX">
    <property type="method" value="X-ray"/>
    <property type="resolution" value="3.20 A"/>
    <property type="chains" value="A=1-403"/>
</dbReference>
<dbReference type="PDB" id="7PC7">
    <property type="method" value="X-ray"/>
    <property type="resolution" value="2.10 A"/>
    <property type="chains" value="E/F=394-403"/>
</dbReference>
<dbReference type="PDB" id="8X3S">
    <property type="method" value="X-ray"/>
    <property type="resolution" value="1.87 A"/>
    <property type="chains" value="B=29-41"/>
</dbReference>
<dbReference type="PDBsum" id="1D5R"/>
<dbReference type="PDBsum" id="2KYL"/>
<dbReference type="PDBsum" id="4O1V"/>
<dbReference type="PDBsum" id="5BUG"/>
<dbReference type="PDBsum" id="5BZX"/>
<dbReference type="PDBsum" id="5BZZ"/>
<dbReference type="PDBsum" id="7JTX"/>
<dbReference type="PDBsum" id="7JUK"/>
<dbReference type="PDBsum" id="7JUL"/>
<dbReference type="PDBsum" id="7JVX"/>
<dbReference type="PDBsum" id="7PC7"/>
<dbReference type="PDBsum" id="8X3S"/>
<dbReference type="SMR" id="P60484"/>
<dbReference type="BioGRID" id="111700">
    <property type="interactions" value="847"/>
</dbReference>
<dbReference type="ComplexPortal" id="CPX-3153">
    <property type="entry name" value="PTEN phosphatase complex"/>
</dbReference>
<dbReference type="CORUM" id="P60484"/>
<dbReference type="DIP" id="DIP-35019N"/>
<dbReference type="ELM" id="P60484"/>
<dbReference type="FunCoup" id="P60484">
    <property type="interactions" value="3633"/>
</dbReference>
<dbReference type="IntAct" id="P60484">
    <property type="interactions" value="90"/>
</dbReference>
<dbReference type="MINT" id="P60484"/>
<dbReference type="STRING" id="9606.ENSP00000361021"/>
<dbReference type="BindingDB" id="P60484"/>
<dbReference type="ChEMBL" id="CHEMBL2052032"/>
<dbReference type="DrugBank" id="DB04327">
    <property type="generic name" value="Phosphatidylethanolamine"/>
</dbReference>
<dbReference type="GuidetoPHARMACOLOGY" id="2497"/>
<dbReference type="SwissLipids" id="SLP:000000849"/>
<dbReference type="TCDB" id="1.A.51.2.4">
    <property type="family name" value="the voltage-gated proton channel (vpc) family"/>
</dbReference>
<dbReference type="CarbonylDB" id="P60484"/>
<dbReference type="DEPOD" id="PTEN"/>
<dbReference type="GlyGen" id="P60484">
    <property type="glycosylation" value="1 site, 1 O-linked glycan (1 site)"/>
</dbReference>
<dbReference type="iPTMnet" id="P60484"/>
<dbReference type="MetOSite" id="P60484"/>
<dbReference type="PhosphoSitePlus" id="P60484"/>
<dbReference type="BioMuta" id="PTEN"/>
<dbReference type="DMDM" id="42560209"/>
<dbReference type="CPTAC" id="CPTAC-5746"/>
<dbReference type="CPTAC" id="CPTAC-5747"/>
<dbReference type="CPTAC" id="CPTAC-5748"/>
<dbReference type="CPTAC" id="non-CPTAC-5426"/>
<dbReference type="CPTAC" id="non-CPTAC-5429"/>
<dbReference type="CPTAC" id="non-CPTAC-5430"/>
<dbReference type="CPTAC" id="non-CPTAC-5566"/>
<dbReference type="CPTAC" id="non-CPTAC-5567"/>
<dbReference type="jPOST" id="P60484"/>
<dbReference type="MassIVE" id="P60484"/>
<dbReference type="PaxDb" id="9606-ENSP00000361021"/>
<dbReference type="PeptideAtlas" id="P60484"/>
<dbReference type="ProteomicsDB" id="57209">
    <molecule id="P60484-1"/>
</dbReference>
<dbReference type="Pumba" id="P60484"/>
<dbReference type="Antibodypedia" id="3420">
    <property type="antibodies" value="1732 antibodies from 53 providers"/>
</dbReference>
<dbReference type="CPTC" id="P60484">
    <property type="antibodies" value="8 antibodies"/>
</dbReference>
<dbReference type="DNASU" id="5728"/>
<dbReference type="Ensembl" id="ENST00000371953.8">
    <molecule id="P60484-1"/>
    <property type="protein sequence ID" value="ENSP00000361021.3"/>
    <property type="gene ID" value="ENSG00000171862.16"/>
</dbReference>
<dbReference type="Ensembl" id="ENST00000644628.2">
    <molecule id="P60484-1"/>
    <property type="protein sequence ID" value="ENSP00000494918.2"/>
    <property type="gene ID" value="ENSG00000284792.2"/>
</dbReference>
<dbReference type="Ensembl" id="ENST00000688308.1">
    <molecule id="P60484-1"/>
    <property type="protein sequence ID" value="ENSP00000508752.1"/>
    <property type="gene ID" value="ENSG00000171862.16"/>
</dbReference>
<dbReference type="Ensembl" id="ENST00000710385.1">
    <molecule id="P60484-1"/>
    <property type="protein sequence ID" value="ENSP00000518242.1"/>
    <property type="gene ID" value="ENSG00000284792.2"/>
</dbReference>
<dbReference type="Ensembl" id="ENST00000710387.1">
    <molecule id="P60484-2"/>
    <property type="protein sequence ID" value="ENSP00000518244.1"/>
    <property type="gene ID" value="ENSG00000284792.2"/>
</dbReference>
<dbReference type="GeneID" id="5728"/>
<dbReference type="KEGG" id="hsa:5728"/>
<dbReference type="MANE-Select" id="ENST00000371953.8">
    <property type="protein sequence ID" value="ENSP00000361021.3"/>
    <property type="RefSeq nucleotide sequence ID" value="NM_000314.8"/>
    <property type="RefSeq protein sequence ID" value="NP_000305.3"/>
</dbReference>
<dbReference type="UCSC" id="uc001kfb.4">
    <molecule id="P60484-1"/>
    <property type="organism name" value="human"/>
</dbReference>
<dbReference type="AGR" id="HGNC:9588"/>
<dbReference type="CTD" id="5728"/>
<dbReference type="DisGeNET" id="5728"/>
<dbReference type="GeneCards" id="PTEN"/>
<dbReference type="GeneReviews" id="PTEN"/>
<dbReference type="HGNC" id="HGNC:9588">
    <property type="gene designation" value="PTEN"/>
</dbReference>
<dbReference type="HPA" id="ENSG00000171862">
    <property type="expression patterns" value="Low tissue specificity"/>
</dbReference>
<dbReference type="MalaCards" id="PTEN"/>
<dbReference type="MIM" id="137800">
    <property type="type" value="phenotype"/>
</dbReference>
<dbReference type="MIM" id="158350">
    <property type="type" value="phenotype"/>
</dbReference>
<dbReference type="MIM" id="176807">
    <property type="type" value="phenotype"/>
</dbReference>
<dbReference type="MIM" id="275355">
    <property type="type" value="phenotype"/>
</dbReference>
<dbReference type="MIM" id="601728">
    <property type="type" value="gene"/>
</dbReference>
<dbReference type="MIM" id="605309">
    <property type="type" value="phenotype"/>
</dbReference>
<dbReference type="MIM" id="608089">
    <property type="type" value="phenotype"/>
</dbReference>
<dbReference type="MIM" id="612242">
    <property type="type" value="phenotype"/>
</dbReference>
<dbReference type="MIM" id="613028">
    <property type="type" value="phenotype"/>
</dbReference>
<dbReference type="neXtProt" id="NX_P60484"/>
<dbReference type="OpenTargets" id="ENSG00000171862"/>
<dbReference type="Orphanet" id="109">
    <property type="disease" value="Bannayan-Riley-Ruvalcaba syndrome"/>
</dbReference>
<dbReference type="Orphanet" id="201">
    <property type="disease" value="Cowden syndrome"/>
</dbReference>
<dbReference type="Orphanet" id="145">
    <property type="disease" value="Hereditary breast and/or ovarian cancer syndrome"/>
</dbReference>
<dbReference type="Orphanet" id="79076">
    <property type="disease" value="Juvenile polyposis of infancy"/>
</dbReference>
<dbReference type="Orphanet" id="65285">
    <property type="disease" value="Lhermitte-Duclos disease"/>
</dbReference>
<dbReference type="Orphanet" id="210548">
    <property type="disease" value="Macrocephaly-intellectual disability-autism syndrome"/>
</dbReference>
<dbReference type="Orphanet" id="2969">
    <property type="disease" value="Proteus-like syndrome"/>
</dbReference>
<dbReference type="Orphanet" id="137608">
    <property type="disease" value="Segmental outgrowth-lipomatosis-arteriovenous malformation-epidermal nevus syndrome"/>
</dbReference>
<dbReference type="Orphanet" id="494547">
    <property type="disease" value="Squamous cell carcinoma of the hypopharynx"/>
</dbReference>
<dbReference type="Orphanet" id="494550">
    <property type="disease" value="Squamous cell carcinoma of the larynx"/>
</dbReference>
<dbReference type="Orphanet" id="502366">
    <property type="disease" value="Squamous cell carcinoma of the lip"/>
</dbReference>
<dbReference type="Orphanet" id="500464">
    <property type="disease" value="Squamous cell carcinoma of the nasal cavity and paranasal sinuses"/>
</dbReference>
<dbReference type="Orphanet" id="502363">
    <property type="disease" value="Squamous cell carcinoma of the oral cavity"/>
</dbReference>
<dbReference type="Orphanet" id="500478">
    <property type="disease" value="Squamous cell carcinoma of the oropharynx"/>
</dbReference>
<dbReference type="PharmGKB" id="PA33942"/>
<dbReference type="VEuPathDB" id="HostDB:ENSG00000171862"/>
<dbReference type="eggNOG" id="KOG2283">
    <property type="taxonomic scope" value="Eukaryota"/>
</dbReference>
<dbReference type="GeneTree" id="ENSGT00940000154335"/>
<dbReference type="HOGENOM" id="CLU_020105_5_2_1"/>
<dbReference type="InParanoid" id="P60484"/>
<dbReference type="OMA" id="CKKFKQR"/>
<dbReference type="OrthoDB" id="16692at2759"/>
<dbReference type="PAN-GO" id="P60484">
    <property type="GO annotations" value="12 GO annotations based on evolutionary models"/>
</dbReference>
<dbReference type="PhylomeDB" id="P60484"/>
<dbReference type="TreeFam" id="TF324513"/>
<dbReference type="BioCyc" id="MetaCyc:HS10404-MONOMER"/>
<dbReference type="BRENDA" id="3.1.3.16">
    <property type="organism ID" value="2681"/>
</dbReference>
<dbReference type="BRENDA" id="3.1.3.67">
    <property type="organism ID" value="2681"/>
</dbReference>
<dbReference type="PathwayCommons" id="P60484"/>
<dbReference type="Reactome" id="R-HSA-1660499">
    <property type="pathway name" value="Synthesis of PIPs at the plasma membrane"/>
</dbReference>
<dbReference type="Reactome" id="R-HSA-1855204">
    <property type="pathway name" value="Synthesis of IP3 and IP4 in the cytosol"/>
</dbReference>
<dbReference type="Reactome" id="R-HSA-199418">
    <property type="pathway name" value="Negative regulation of the PI3K/AKT network"/>
</dbReference>
<dbReference type="Reactome" id="R-HSA-202424">
    <property type="pathway name" value="Downstream TCR signaling"/>
</dbReference>
<dbReference type="Reactome" id="R-HSA-5628897">
    <property type="pathway name" value="TP53 Regulates Metabolic Genes"/>
</dbReference>
<dbReference type="Reactome" id="R-HSA-5674404">
    <property type="pathway name" value="PTEN Loss of Function in Cancer"/>
</dbReference>
<dbReference type="Reactome" id="R-HSA-5689880">
    <property type="pathway name" value="Ub-specific processing proteases"/>
</dbReference>
<dbReference type="Reactome" id="R-HSA-5689896">
    <property type="pathway name" value="Ovarian tumor domain proteases"/>
</dbReference>
<dbReference type="Reactome" id="R-HSA-8943723">
    <property type="pathway name" value="Regulation of PTEN mRNA translation"/>
</dbReference>
<dbReference type="Reactome" id="R-HSA-8948747">
    <property type="pathway name" value="Regulation of PTEN localization"/>
</dbReference>
<dbReference type="Reactome" id="R-HSA-8948751">
    <property type="pathway name" value="Regulation of PTEN stability and activity"/>
</dbReference>
<dbReference type="Reactome" id="R-HSA-8986944">
    <property type="pathway name" value="Transcriptional Regulation by MECP2"/>
</dbReference>
<dbReference type="SignaLink" id="P60484"/>
<dbReference type="SIGNOR" id="P60484"/>
<dbReference type="BioGRID-ORCS" id="5728">
    <property type="hits" value="85 hits in 1159 CRISPR screens"/>
</dbReference>
<dbReference type="CD-CODE" id="8C2F96ED">
    <property type="entry name" value="Centrosome"/>
</dbReference>
<dbReference type="CD-CODE" id="B5B9A610">
    <property type="entry name" value="PML body"/>
</dbReference>
<dbReference type="ChiTaRS" id="PTEN">
    <property type="organism name" value="human"/>
</dbReference>
<dbReference type="EvolutionaryTrace" id="P60484"/>
<dbReference type="GeneWiki" id="PTEN_(gene)"/>
<dbReference type="GenomeRNAi" id="5728"/>
<dbReference type="Pharos" id="P60484">
    <property type="development level" value="Tchem"/>
</dbReference>
<dbReference type="PRO" id="PR:P60484"/>
<dbReference type="Proteomes" id="UP000005640">
    <property type="component" value="Chromosome 10"/>
</dbReference>
<dbReference type="RNAct" id="P60484">
    <property type="molecule type" value="protein"/>
</dbReference>
<dbReference type="Bgee" id="ENSG00000171862">
    <property type="expression patterns" value="Expressed in sperm and 191 other cell types or tissues"/>
</dbReference>
<dbReference type="ExpressionAtlas" id="P60484">
    <property type="expression patterns" value="baseline and differential"/>
</dbReference>
<dbReference type="GO" id="GO:0016324">
    <property type="term" value="C:apical plasma membrane"/>
    <property type="evidence" value="ECO:0000315"/>
    <property type="project" value="UniProtKB"/>
</dbReference>
<dbReference type="GO" id="GO:0042995">
    <property type="term" value="C:cell projection"/>
    <property type="evidence" value="ECO:0000314"/>
    <property type="project" value="UniProtKB"/>
</dbReference>
<dbReference type="GO" id="GO:0005737">
    <property type="term" value="C:cytoplasm"/>
    <property type="evidence" value="ECO:0000314"/>
    <property type="project" value="UniProtKB"/>
</dbReference>
<dbReference type="GO" id="GO:0009898">
    <property type="term" value="C:cytoplasmic side of plasma membrane"/>
    <property type="evidence" value="ECO:0000314"/>
    <property type="project" value="UniProtKB"/>
</dbReference>
<dbReference type="GO" id="GO:0005829">
    <property type="term" value="C:cytosol"/>
    <property type="evidence" value="ECO:0000314"/>
    <property type="project" value="HPA"/>
</dbReference>
<dbReference type="GO" id="GO:0043197">
    <property type="term" value="C:dendritic spine"/>
    <property type="evidence" value="ECO:0007669"/>
    <property type="project" value="UniProtKB-SubCell"/>
</dbReference>
<dbReference type="GO" id="GO:0005576">
    <property type="term" value="C:extracellular region"/>
    <property type="evidence" value="ECO:0007669"/>
    <property type="project" value="UniProtKB-SubCell"/>
</dbReference>
<dbReference type="GO" id="GO:0035749">
    <property type="term" value="C:myelin sheath adaxonal region"/>
    <property type="evidence" value="ECO:0000250"/>
    <property type="project" value="BHF-UCL"/>
</dbReference>
<dbReference type="GO" id="GO:0043005">
    <property type="term" value="C:neuron projection"/>
    <property type="evidence" value="ECO:0000250"/>
    <property type="project" value="BHF-UCL"/>
</dbReference>
<dbReference type="GO" id="GO:0005654">
    <property type="term" value="C:nucleoplasm"/>
    <property type="evidence" value="ECO:0000314"/>
    <property type="project" value="HPA"/>
</dbReference>
<dbReference type="GO" id="GO:0005634">
    <property type="term" value="C:nucleus"/>
    <property type="evidence" value="ECO:0000314"/>
    <property type="project" value="UniProtKB"/>
</dbReference>
<dbReference type="GO" id="GO:0005886">
    <property type="term" value="C:plasma membrane"/>
    <property type="evidence" value="ECO:0000314"/>
    <property type="project" value="UniProtKB"/>
</dbReference>
<dbReference type="GO" id="GO:0016605">
    <property type="term" value="C:PML body"/>
    <property type="evidence" value="ECO:0007669"/>
    <property type="project" value="UniProtKB-SubCell"/>
</dbReference>
<dbReference type="GO" id="GO:0014069">
    <property type="term" value="C:postsynaptic density"/>
    <property type="evidence" value="ECO:0007669"/>
    <property type="project" value="UniProtKB-SubCell"/>
</dbReference>
<dbReference type="GO" id="GO:0043220">
    <property type="term" value="C:Schmidt-Lanterman incisure"/>
    <property type="evidence" value="ECO:0000250"/>
    <property type="project" value="BHF-UCL"/>
</dbReference>
<dbReference type="GO" id="GO:0010997">
    <property type="term" value="F:anaphase-promoting complex binding"/>
    <property type="evidence" value="ECO:0000353"/>
    <property type="project" value="BHF-UCL"/>
</dbReference>
<dbReference type="GO" id="GO:0008013">
    <property type="term" value="F:beta-catenin binding"/>
    <property type="evidence" value="ECO:0000353"/>
    <property type="project" value="BHF-UCL"/>
</dbReference>
<dbReference type="GO" id="GO:0019899">
    <property type="term" value="F:enzyme binding"/>
    <property type="evidence" value="ECO:0000353"/>
    <property type="project" value="UniProtKB"/>
</dbReference>
<dbReference type="GO" id="GO:0042802">
    <property type="term" value="F:identical protein binding"/>
    <property type="evidence" value="ECO:0000353"/>
    <property type="project" value="IntAct"/>
</dbReference>
<dbReference type="GO" id="GO:0030351">
    <property type="term" value="F:inositol-1,3,4,5,6-pentakisphosphate 3-phosphatase activity"/>
    <property type="evidence" value="ECO:0000314"/>
    <property type="project" value="UniProtKB"/>
</dbReference>
<dbReference type="GO" id="GO:0051717">
    <property type="term" value="F:inositol-1,3,4,5-tetrakisphosphate 3-phosphatase activity"/>
    <property type="evidence" value="ECO:0000314"/>
    <property type="project" value="UniProtKB"/>
</dbReference>
<dbReference type="GO" id="GO:0008289">
    <property type="term" value="F:lipid binding"/>
    <property type="evidence" value="ECO:0007669"/>
    <property type="project" value="UniProtKB-KW"/>
</dbReference>
<dbReference type="GO" id="GO:0140678">
    <property type="term" value="F:molecular function inhibitor activity"/>
    <property type="evidence" value="ECO:0000315"/>
    <property type="project" value="DisProt"/>
</dbReference>
<dbReference type="GO" id="GO:0030165">
    <property type="term" value="F:PDZ domain binding"/>
    <property type="evidence" value="ECO:0000353"/>
    <property type="project" value="UniProtKB"/>
</dbReference>
<dbReference type="GO" id="GO:0052866">
    <property type="term" value="F:phosphatidylinositol phosphate phosphatase activity"/>
    <property type="evidence" value="ECO:0000314"/>
    <property type="project" value="UniProt"/>
</dbReference>
<dbReference type="GO" id="GO:0016314">
    <property type="term" value="F:phosphatidylinositol-3,4,5-trisphosphate 3-phosphatase activity"/>
    <property type="evidence" value="ECO:0000314"/>
    <property type="project" value="UniProtKB"/>
</dbReference>
<dbReference type="GO" id="GO:0051800">
    <property type="term" value="F:phosphatidylinositol-3,4-bisphosphate 3-phosphatase activity"/>
    <property type="evidence" value="ECO:0000314"/>
    <property type="project" value="UniProtKB"/>
</dbReference>
<dbReference type="GO" id="GO:0004438">
    <property type="term" value="F:phosphatidylinositol-3-phosphate phosphatase activity"/>
    <property type="evidence" value="ECO:0000314"/>
    <property type="project" value="UniProtKB"/>
</dbReference>
<dbReference type="GO" id="GO:0004721">
    <property type="term" value="F:phosphoprotein phosphatase activity"/>
    <property type="evidence" value="ECO:0000314"/>
    <property type="project" value="BHF-UCL"/>
</dbReference>
<dbReference type="GO" id="GO:0004722">
    <property type="term" value="F:protein serine/threonine phosphatase activity"/>
    <property type="evidence" value="ECO:0000314"/>
    <property type="project" value="UniProtKB"/>
</dbReference>
<dbReference type="GO" id="GO:0004725">
    <property type="term" value="F:protein tyrosine phosphatase activity"/>
    <property type="evidence" value="ECO:0000314"/>
    <property type="project" value="UniProtKB"/>
</dbReference>
<dbReference type="GO" id="GO:1990757">
    <property type="term" value="F:ubiquitin ligase activator activity"/>
    <property type="evidence" value="ECO:0000250"/>
    <property type="project" value="BHF-UCL"/>
</dbReference>
<dbReference type="GO" id="GO:1990381">
    <property type="term" value="F:ubiquitin-specific protease binding"/>
    <property type="evidence" value="ECO:0000353"/>
    <property type="project" value="MGI"/>
</dbReference>
<dbReference type="GO" id="GO:0030534">
    <property type="term" value="P:adult behavior"/>
    <property type="evidence" value="ECO:0000250"/>
    <property type="project" value="BHF-UCL"/>
</dbReference>
<dbReference type="GO" id="GO:0006915">
    <property type="term" value="P:apoptotic process"/>
    <property type="evidence" value="ECO:0007669"/>
    <property type="project" value="UniProtKB-KW"/>
</dbReference>
<dbReference type="GO" id="GO:0016477">
    <property type="term" value="P:cell migration"/>
    <property type="evidence" value="ECO:0000250"/>
    <property type="project" value="UniProtKB"/>
</dbReference>
<dbReference type="GO" id="GO:0048870">
    <property type="term" value="P:cell motility"/>
    <property type="evidence" value="ECO:0000318"/>
    <property type="project" value="GO_Central"/>
</dbReference>
<dbReference type="GO" id="GO:0071257">
    <property type="term" value="P:cellular response to electrical stimulus"/>
    <property type="evidence" value="ECO:0000315"/>
    <property type="project" value="BHF-UCL"/>
</dbReference>
<dbReference type="GO" id="GO:0007417">
    <property type="term" value="P:central nervous system development"/>
    <property type="evidence" value="ECO:0000250"/>
    <property type="project" value="UniProtKB"/>
</dbReference>
<dbReference type="GO" id="GO:0032286">
    <property type="term" value="P:central nervous system myelin maintenance"/>
    <property type="evidence" value="ECO:0000250"/>
    <property type="project" value="BHF-UCL"/>
</dbReference>
<dbReference type="GO" id="GO:0021955">
    <property type="term" value="P:central nervous system neuron axonogenesis"/>
    <property type="evidence" value="ECO:0000250"/>
    <property type="project" value="BHF-UCL"/>
</dbReference>
<dbReference type="GO" id="GO:0060997">
    <property type="term" value="P:dendritic spine morphogenesis"/>
    <property type="evidence" value="ECO:0000250"/>
    <property type="project" value="BHF-UCL"/>
</dbReference>
<dbReference type="GO" id="GO:0021542">
    <property type="term" value="P:dentate gyrus development"/>
    <property type="evidence" value="ECO:0000250"/>
    <property type="project" value="BHF-UCL"/>
</dbReference>
<dbReference type="GO" id="GO:0048853">
    <property type="term" value="P:forebrain morphogenesis"/>
    <property type="evidence" value="ECO:0000250"/>
    <property type="project" value="BHF-UCL"/>
</dbReference>
<dbReference type="GO" id="GO:0007507">
    <property type="term" value="P:heart development"/>
    <property type="evidence" value="ECO:0000250"/>
    <property type="project" value="UniProtKB"/>
</dbReference>
<dbReference type="GO" id="GO:0007611">
    <property type="term" value="P:learning or memory"/>
    <property type="evidence" value="ECO:0000250"/>
    <property type="project" value="BHF-UCL"/>
</dbReference>
<dbReference type="GO" id="GO:0045475">
    <property type="term" value="P:locomotor rhythm"/>
    <property type="evidence" value="ECO:0000250"/>
    <property type="project" value="BHF-UCL"/>
</dbReference>
<dbReference type="GO" id="GO:0007626">
    <property type="term" value="P:locomotory behavior"/>
    <property type="evidence" value="ECO:0000250"/>
    <property type="project" value="BHF-UCL"/>
</dbReference>
<dbReference type="GO" id="GO:0042711">
    <property type="term" value="P:maternal behavior"/>
    <property type="evidence" value="ECO:0000250"/>
    <property type="project" value="BHF-UCL"/>
</dbReference>
<dbReference type="GO" id="GO:0033555">
    <property type="term" value="P:multicellular organismal response to stress"/>
    <property type="evidence" value="ECO:0000250"/>
    <property type="project" value="BHF-UCL"/>
</dbReference>
<dbReference type="GO" id="GO:0050771">
    <property type="term" value="P:negative regulation of axonogenesis"/>
    <property type="evidence" value="ECO:0000250"/>
    <property type="project" value="BHF-UCL"/>
</dbReference>
<dbReference type="GO" id="GO:1902807">
    <property type="term" value="P:negative regulation of cell cycle G1/S phase transition"/>
    <property type="evidence" value="ECO:0000314"/>
    <property type="project" value="UniProtKB"/>
</dbReference>
<dbReference type="GO" id="GO:0030336">
    <property type="term" value="P:negative regulation of cell migration"/>
    <property type="evidence" value="ECO:0000315"/>
    <property type="project" value="UniProtKB"/>
</dbReference>
<dbReference type="GO" id="GO:0008285">
    <property type="term" value="P:negative regulation of cell population proliferation"/>
    <property type="evidence" value="ECO:0000314"/>
    <property type="project" value="BHF-UCL"/>
</dbReference>
<dbReference type="GO" id="GO:0045792">
    <property type="term" value="P:negative regulation of cell size"/>
    <property type="evidence" value="ECO:0000250"/>
    <property type="project" value="BHF-UCL"/>
</dbReference>
<dbReference type="GO" id="GO:2000773">
    <property type="term" value="P:negative regulation of cellular senescence"/>
    <property type="evidence" value="ECO:0000250"/>
    <property type="project" value="BHF-UCL"/>
</dbReference>
<dbReference type="GO" id="GO:0010719">
    <property type="term" value="P:negative regulation of epithelial to mesenchymal transition"/>
    <property type="evidence" value="ECO:0000315"/>
    <property type="project" value="BHF-UCL"/>
</dbReference>
<dbReference type="GO" id="GO:0090394">
    <property type="term" value="P:negative regulation of excitatory postsynaptic potential"/>
    <property type="evidence" value="ECO:0000250"/>
    <property type="project" value="BHF-UCL"/>
</dbReference>
<dbReference type="GO" id="GO:0051895">
    <property type="term" value="P:negative regulation of focal adhesion assembly"/>
    <property type="evidence" value="ECO:0000315"/>
    <property type="project" value="UniProtKB"/>
</dbReference>
<dbReference type="GO" id="GO:2000134">
    <property type="term" value="P:negative regulation of G1/S transition of mitotic cell cycle"/>
    <property type="evidence" value="ECO:0000314"/>
    <property type="project" value="BHF-UCL"/>
</dbReference>
<dbReference type="GO" id="GO:0051548">
    <property type="term" value="P:negative regulation of keratinocyte migration"/>
    <property type="evidence" value="ECO:0000315"/>
    <property type="project" value="BHF-UCL"/>
</dbReference>
<dbReference type="GO" id="GO:0010977">
    <property type="term" value="P:negative regulation of neuron projection development"/>
    <property type="evidence" value="ECO:0000250"/>
    <property type="project" value="ARUK-UCL"/>
</dbReference>
<dbReference type="GO" id="GO:0046621">
    <property type="term" value="P:negative regulation of organ growth"/>
    <property type="evidence" value="ECO:0000250"/>
    <property type="project" value="BHF-UCL"/>
</dbReference>
<dbReference type="GO" id="GO:0045668">
    <property type="term" value="P:negative regulation of osteoblast differentiation"/>
    <property type="evidence" value="ECO:0000314"/>
    <property type="project" value="UniProt"/>
</dbReference>
<dbReference type="GO" id="GO:0033137">
    <property type="term" value="P:negative regulation of peptidyl-serine phosphorylation"/>
    <property type="evidence" value="ECO:0000315"/>
    <property type="project" value="UniProtKB"/>
</dbReference>
<dbReference type="GO" id="GO:0051898">
    <property type="term" value="P:negative regulation of phosphatidylinositol 3-kinase/protein kinase B signal transduction"/>
    <property type="evidence" value="ECO:0000314"/>
    <property type="project" value="UniProt"/>
</dbReference>
<dbReference type="GO" id="GO:2000808">
    <property type="term" value="P:negative regulation of synaptic vesicle clustering"/>
    <property type="evidence" value="ECO:0000250"/>
    <property type="project" value="BHF-UCL"/>
</dbReference>
<dbReference type="GO" id="GO:1904706">
    <property type="term" value="P:negative regulation of vascular associated smooth muscle cell proliferation"/>
    <property type="evidence" value="ECO:0000315"/>
    <property type="project" value="BHF-UCL"/>
</dbReference>
<dbReference type="GO" id="GO:1903690">
    <property type="term" value="P:negative regulation of wound healing, spreading of epidermal cells"/>
    <property type="evidence" value="ECO:0000315"/>
    <property type="project" value="BHF-UCL"/>
</dbReference>
<dbReference type="GO" id="GO:0007270">
    <property type="term" value="P:neuron-neuron synaptic transmission"/>
    <property type="evidence" value="ECO:0000250"/>
    <property type="project" value="BHF-UCL"/>
</dbReference>
<dbReference type="GO" id="GO:0043491">
    <property type="term" value="P:phosphatidylinositol 3-kinase/protein kinase B signal transduction"/>
    <property type="evidence" value="ECO:0000318"/>
    <property type="project" value="GO_Central"/>
</dbReference>
<dbReference type="GO" id="GO:0006661">
    <property type="term" value="P:phosphatidylinositol biosynthetic process"/>
    <property type="evidence" value="ECO:0000304"/>
    <property type="project" value="Reactome"/>
</dbReference>
<dbReference type="GO" id="GO:0046856">
    <property type="term" value="P:phosphatidylinositol dephosphorylation"/>
    <property type="evidence" value="ECO:0000314"/>
    <property type="project" value="UniProtKB"/>
</dbReference>
<dbReference type="GO" id="GO:0008284">
    <property type="term" value="P:positive regulation of cell population proliferation"/>
    <property type="evidence" value="ECO:0000250"/>
    <property type="project" value="BHF-UCL"/>
</dbReference>
<dbReference type="GO" id="GO:2000463">
    <property type="term" value="P:positive regulation of excitatory postsynaptic potential"/>
    <property type="evidence" value="ECO:0000250"/>
    <property type="project" value="BHF-UCL"/>
</dbReference>
<dbReference type="GO" id="GO:1902533">
    <property type="term" value="P:positive regulation of intracellular signal transduction"/>
    <property type="evidence" value="ECO:0000315"/>
    <property type="project" value="BHF-UCL"/>
</dbReference>
<dbReference type="GO" id="GO:0045944">
    <property type="term" value="P:positive regulation of transcription by RNA polymerase II"/>
    <property type="evidence" value="ECO:0000315"/>
    <property type="project" value="BHF-UCL"/>
</dbReference>
<dbReference type="GO" id="GO:2000060">
    <property type="term" value="P:positive regulation of ubiquitin-dependent protein catabolic process"/>
    <property type="evidence" value="ECO:0000314"/>
    <property type="project" value="BHF-UCL"/>
</dbReference>
<dbReference type="GO" id="GO:0097107">
    <property type="term" value="P:postsynaptic density assembly"/>
    <property type="evidence" value="ECO:0000250"/>
    <property type="project" value="BHF-UCL"/>
</dbReference>
<dbReference type="GO" id="GO:0060134">
    <property type="term" value="P:prepulse inhibition"/>
    <property type="evidence" value="ECO:0000250"/>
    <property type="project" value="BHF-UCL"/>
</dbReference>
<dbReference type="GO" id="GO:0097105">
    <property type="term" value="P:presynaptic membrane assembly"/>
    <property type="evidence" value="ECO:0000250"/>
    <property type="project" value="BHF-UCL"/>
</dbReference>
<dbReference type="GO" id="GO:0006470">
    <property type="term" value="P:protein dephosphorylation"/>
    <property type="evidence" value="ECO:0000314"/>
    <property type="project" value="UniProtKB"/>
</dbReference>
<dbReference type="GO" id="GO:0050821">
    <property type="term" value="P:protein stabilization"/>
    <property type="evidence" value="ECO:0000314"/>
    <property type="project" value="BHF-UCL"/>
</dbReference>
<dbReference type="GO" id="GO:0010975">
    <property type="term" value="P:regulation of neuron projection development"/>
    <property type="evidence" value="ECO:0000250"/>
    <property type="project" value="UniProtKB"/>
</dbReference>
<dbReference type="GO" id="GO:0051896">
    <property type="term" value="P:regulation of phosphatidylinositol 3-kinase/protein kinase B signal transduction"/>
    <property type="evidence" value="ECO:0000318"/>
    <property type="project" value="GO_Central"/>
</dbReference>
<dbReference type="GO" id="GO:0031647">
    <property type="term" value="P:regulation of protein stability"/>
    <property type="evidence" value="ECO:0000315"/>
    <property type="project" value="UniProtKB"/>
</dbReference>
<dbReference type="GO" id="GO:0060024">
    <property type="term" value="P:rhythmic synaptic transmission"/>
    <property type="evidence" value="ECO:0000250"/>
    <property type="project" value="BHF-UCL"/>
</dbReference>
<dbReference type="GO" id="GO:0035176">
    <property type="term" value="P:social behavior"/>
    <property type="evidence" value="ECO:0000250"/>
    <property type="project" value="BHF-UCL"/>
</dbReference>
<dbReference type="GO" id="GO:0007056">
    <property type="term" value="P:spindle assembly involved in female meiosis"/>
    <property type="evidence" value="ECO:0000314"/>
    <property type="project" value="UniProt"/>
</dbReference>
<dbReference type="GO" id="GO:0007416">
    <property type="term" value="P:synapse assembly"/>
    <property type="evidence" value="ECO:0000250"/>
    <property type="project" value="BHF-UCL"/>
</dbReference>
<dbReference type="GO" id="GO:0060074">
    <property type="term" value="P:synapse maturation"/>
    <property type="evidence" value="ECO:0000250"/>
    <property type="project" value="BHF-UCL"/>
</dbReference>
<dbReference type="CDD" id="cd14509">
    <property type="entry name" value="PTP_PTEN"/>
    <property type="match status" value="1"/>
</dbReference>
<dbReference type="FunFam" id="2.60.40.1110:FF:000003">
    <property type="entry name" value="Phosphatidylinositol 3,4,5-trisphosphate 3-phosphatase and dual-specificity protein phosphatase PTEN"/>
    <property type="match status" value="1"/>
</dbReference>
<dbReference type="FunFam" id="3.90.190.10:FF:000029">
    <property type="entry name" value="Phosphatidylinositol 3,4,5-trisphosphate 3-phosphatase and dual-specificity protein phosphatase PTEN"/>
    <property type="match status" value="1"/>
</dbReference>
<dbReference type="Gene3D" id="2.60.40.1110">
    <property type="match status" value="1"/>
</dbReference>
<dbReference type="Gene3D" id="3.90.190.10">
    <property type="entry name" value="Protein tyrosine phosphatase superfamily"/>
    <property type="match status" value="1"/>
</dbReference>
<dbReference type="InterPro" id="IPR017361">
    <property type="entry name" value="Bifunc_PIno_P3_Pase/Pase_PTEN"/>
</dbReference>
<dbReference type="InterPro" id="IPR035892">
    <property type="entry name" value="C2_domain_sf"/>
</dbReference>
<dbReference type="InterPro" id="IPR051281">
    <property type="entry name" value="Dual-spec_lipid-protein_phosph"/>
</dbReference>
<dbReference type="InterPro" id="IPR029021">
    <property type="entry name" value="Prot-tyrosine_phosphatase-like"/>
</dbReference>
<dbReference type="InterPro" id="IPR045101">
    <property type="entry name" value="PTP_PTEN"/>
</dbReference>
<dbReference type="InterPro" id="IPR014020">
    <property type="entry name" value="Tensin_C2-dom"/>
</dbReference>
<dbReference type="InterPro" id="IPR029023">
    <property type="entry name" value="Tensin_phosphatase"/>
</dbReference>
<dbReference type="InterPro" id="IPR016130">
    <property type="entry name" value="Tyr_Pase_AS"/>
</dbReference>
<dbReference type="InterPro" id="IPR003595">
    <property type="entry name" value="Tyr_Pase_cat"/>
</dbReference>
<dbReference type="InterPro" id="IPR000387">
    <property type="entry name" value="Tyr_Pase_dom"/>
</dbReference>
<dbReference type="PANTHER" id="PTHR12305">
    <property type="entry name" value="PHOSPHATASE WITH HOMOLOGY TO TENSIN"/>
    <property type="match status" value="1"/>
</dbReference>
<dbReference type="PANTHER" id="PTHR12305:SF81">
    <property type="entry name" value="PHOSPHATIDYLINOSITOL 3,4,5-TRISPHOSPHATE 3-PHOSPHATASE AND DUAL-SPECIFICITY PROTEIN PHOSPHATASE PTEN"/>
    <property type="match status" value="1"/>
</dbReference>
<dbReference type="Pfam" id="PF10409">
    <property type="entry name" value="PTEN_C2"/>
    <property type="match status" value="1"/>
</dbReference>
<dbReference type="Pfam" id="PF22785">
    <property type="entry name" value="Tc-R-P"/>
    <property type="match status" value="1"/>
</dbReference>
<dbReference type="PIRSF" id="PIRSF038025">
    <property type="entry name" value="PTEN"/>
    <property type="match status" value="1"/>
</dbReference>
<dbReference type="SMART" id="SM01326">
    <property type="entry name" value="PTEN_C2"/>
    <property type="match status" value="1"/>
</dbReference>
<dbReference type="SMART" id="SM00404">
    <property type="entry name" value="PTPc_motif"/>
    <property type="match status" value="1"/>
</dbReference>
<dbReference type="SMART" id="SM01301">
    <property type="entry name" value="PTPlike_phytase"/>
    <property type="match status" value="1"/>
</dbReference>
<dbReference type="SUPFAM" id="SSF52799">
    <property type="entry name" value="(Phosphotyrosine protein) phosphatases II"/>
    <property type="match status" value="1"/>
</dbReference>
<dbReference type="SUPFAM" id="SSF49562">
    <property type="entry name" value="C2 domain (Calcium/lipid-binding domain, CaLB)"/>
    <property type="match status" value="1"/>
</dbReference>
<dbReference type="PROSITE" id="PS51182">
    <property type="entry name" value="C2_TENSIN"/>
    <property type="match status" value="1"/>
</dbReference>
<dbReference type="PROSITE" id="PS51181">
    <property type="entry name" value="PPASE_TENSIN"/>
    <property type="match status" value="1"/>
</dbReference>
<dbReference type="PROSITE" id="PS50056">
    <property type="entry name" value="TYR_PHOSPHATASE_2"/>
    <property type="match status" value="1"/>
</dbReference>